<proteinExistence type="evidence at protein level"/>
<organism>
    <name type="scientific">Homo sapiens</name>
    <name type="common">Human</name>
    <dbReference type="NCBI Taxonomy" id="9606"/>
    <lineage>
        <taxon>Eukaryota</taxon>
        <taxon>Metazoa</taxon>
        <taxon>Chordata</taxon>
        <taxon>Craniata</taxon>
        <taxon>Vertebrata</taxon>
        <taxon>Euteleostomi</taxon>
        <taxon>Mammalia</taxon>
        <taxon>Eutheria</taxon>
        <taxon>Euarchontoglires</taxon>
        <taxon>Primates</taxon>
        <taxon>Haplorrhini</taxon>
        <taxon>Catarrhini</taxon>
        <taxon>Hominidae</taxon>
        <taxon>Homo</taxon>
    </lineage>
</organism>
<reference key="1">
    <citation type="journal article" date="1994" name="Cell Growth Differ.">
        <title>Cloning and characterization of human and murine homologues of the Drosophila polo serine-threonine kinase.</title>
        <authorList>
            <person name="Hamanaka R."/>
            <person name="Maloid S."/>
            <person name="Smith M.R."/>
            <person name="O'Connell C.D."/>
            <person name="Longo D.L."/>
            <person name="Ferris D.K."/>
        </authorList>
    </citation>
    <scope>NUCLEOTIDE SEQUENCE [MRNA]</scope>
    <source>
        <tissue>Placenta</tissue>
    </source>
</reference>
<reference key="2">
    <citation type="journal article" date="1993" name="Mol. Cell. Biol.">
        <title>Cell cycle- and terminal differentiation-associated regulation of the mouse mRNA encoding a conserved mitotic protein kinase.</title>
        <authorList>
            <person name="Lake R.J."/>
            <person name="Jelinek W.R."/>
        </authorList>
    </citation>
    <scope>NUCLEOTIDE SEQUENCE [MRNA]</scope>
</reference>
<reference key="3">
    <citation type="journal article" date="1994" name="J. Cell Sci.">
        <title>Cell cycle analysis and chromosomal localization of human Plk1, a putative homologue of the mitotic kinases Drosophila polo and Saccharomyces cerevisiae Cdc5.</title>
        <authorList>
            <person name="Golsteyn R.M."/>
            <person name="Schultz S.J."/>
            <person name="Bartek J."/>
            <person name="Ziemiecki A."/>
            <person name="Ried T."/>
            <person name="Nigg E.A."/>
        </authorList>
    </citation>
    <scope>NUCLEOTIDE SEQUENCE [MRNA]</scope>
</reference>
<reference key="4">
    <citation type="journal article" date="1994" name="Proc. Natl. Acad. Sci. U.S.A.">
        <title>Induction and down-regulation of PLK, a human serine/threonine kinase expressed in proliferating cells and tumors.</title>
        <authorList>
            <person name="Holtrich U."/>
            <person name="Wolf G."/>
            <person name="Braeuninger A."/>
            <person name="Karn T."/>
            <person name="Boehme B."/>
            <person name="Ruebsamen-Waigmann H."/>
            <person name="Strebhardt K."/>
        </authorList>
    </citation>
    <scope>NUCLEOTIDE SEQUENCE [MRNA]</scope>
    <source>
        <tissue>Lung</tissue>
    </source>
</reference>
<reference key="5">
    <citation type="journal article" date="2004" name="Genome Res.">
        <title>The status, quality, and expansion of the NIH full-length cDNA project: the Mammalian Gene Collection (MGC).</title>
        <authorList>
            <consortium name="The MGC Project Team"/>
        </authorList>
    </citation>
    <scope>NUCLEOTIDE SEQUENCE [LARGE SCALE MRNA]</scope>
    <source>
        <tissue>Colon</tissue>
        <tissue>Lung</tissue>
    </source>
</reference>
<reference key="6">
    <citation type="journal article" date="1995" name="Oncogene">
        <title>Identification and functional characterization of the human and murine polo-like kinase (Plk) promoter.</title>
        <authorList>
            <person name="Brauninger A."/>
            <person name="Strebhardt K."/>
            <person name="Rubsamen-Waigmann H."/>
        </authorList>
    </citation>
    <scope>NUCLEOTIDE SEQUENCE [GENOMIC DNA] OF 1-136</scope>
</reference>
<reference key="7">
    <citation type="journal article" date="1997" name="J. Biol. Chem.">
        <title>Cell cycle regulation of the human polo-like kinase (PLK) promoter.</title>
        <authorList>
            <person name="Uchiumi T."/>
            <person name="Longo D.L."/>
            <person name="Ferris D.K."/>
        </authorList>
    </citation>
    <scope>NUCLEOTIDE SEQUENCE [GENOMIC DNA] OF 1-136</scope>
</reference>
<reference key="8">
    <citation type="journal article" date="1996" name="J. Cell Biol.">
        <title>Antibody microinjection reveals an essential role for human polo-like kinase 1 (Plk1) in the functional maturation of mitotic centrosomes.</title>
        <authorList>
            <person name="Lane H.A."/>
            <person name="Nigg E.A."/>
        </authorList>
    </citation>
    <scope>FUNCTION IN CENTROSOME MATURATION</scope>
    <scope>SUBCELLULAR LOCATION</scope>
</reference>
<reference key="9">
    <citation type="journal article" date="2000" name="Cell. Signal.">
        <title>The human polo-like kinase, PLK, regulates cdc2/cyclin B through phosphorylation and activation of the cdc25C phosphatase.</title>
        <authorList>
            <person name="Roshak A.K."/>
            <person name="Capper E.A."/>
            <person name="Imburgia C."/>
            <person name="Fornwald J."/>
            <person name="Scott G."/>
            <person name="Marshall L.A."/>
        </authorList>
    </citation>
    <scope>FUNCTION IN PHOSPHORYLATION OF CDC25C</scope>
</reference>
<reference key="10">
    <citation type="journal article" date="2002" name="J. Biol. Chem.">
        <title>Phosphorylation of threonine 210 and the role of serine 137 in the regulation of mammalian polo-like kinase.</title>
        <authorList>
            <person name="Jang Y.-J."/>
            <person name="Ma S."/>
            <person name="Terada Y."/>
            <person name="Erikson R.L."/>
        </authorList>
    </citation>
    <scope>FUNCTION</scope>
    <scope>PHOSPHORYLATION AT SER-137 AND THR-210</scope>
    <scope>MUTAGENESIS OF LYS-82; SER-137 AND THR-210</scope>
</reference>
<reference key="11">
    <citation type="journal article" date="2002" name="Oncogene">
        <title>Cooperative phosphorylation including the activity of polo-like kinase 1 regulates the subcellular localization of cyclin B1.</title>
        <authorList>
            <person name="Yuan J."/>
            <person name="Eckerdt F."/>
            <person name="Bereiter-Hahn J."/>
            <person name="Kurunci-Csacsko E."/>
            <person name="Kaufmann M."/>
            <person name="Strebhardt K."/>
        </authorList>
    </citation>
    <scope>FUNCTION IN PHOSPHORYLATION OF CCNB1</scope>
    <scope>SUBCELLULAR LOCATION</scope>
    <scope>MUTAGENESIS OF LYS-82 AND THR-210</scope>
</reference>
<reference key="12">
    <citation type="journal article" date="2002" name="Proteomics">
        <title>Identification of phosphorylation sites in the polo-like kinases Plx1 and Plk1 by a novel strategy based on element and electrospray high resolution mass spectrometry.</title>
        <authorList>
            <person name="Wind M."/>
            <person name="Kelm O."/>
            <person name="Nigg E.A."/>
            <person name="Lehmann W.D."/>
        </authorList>
    </citation>
    <scope>PHOSPHORYLATION AT SER-335</scope>
</reference>
<reference key="13">
    <citation type="journal article" date="2003" name="Dev. Cell">
        <title>Polo-like kinase 1 regulates Nlp, a centrosome protein involved in microtubule nucleation.</title>
        <authorList>
            <person name="Casenghi M."/>
            <person name="Meraldi P."/>
            <person name="Weinhart U."/>
            <person name="Duncan P.I."/>
            <person name="Korner R."/>
            <person name="Nigg E.A."/>
        </authorList>
    </citation>
    <scope>FUNCTION IN PHOSPHORYLATION OF NINL</scope>
</reference>
<reference key="14">
    <citation type="journal article" date="2003" name="J. Biol. Chem.">
        <title>Stk10, a new member of the polo-like kinase kinase family highly expressed in hematopoietic tissue.</title>
        <authorList>
            <person name="Walter S.A."/>
            <person name="Cutler R.E. Jr."/>
            <person name="Martinez R."/>
            <person name="Gishizky M."/>
            <person name="Hill R.J."/>
        </authorList>
    </citation>
    <scope>PHOSPHORYLATION BY STK10</scope>
</reference>
<reference key="15">
    <citation type="journal article" date="2003" name="J. Biol. Chem.">
        <title>Identification of a consensus motif for Plk (Polo-like kinase) phosphorylation reveals Myt1 as a Plk1 substrate.</title>
        <authorList>
            <person name="Nakajima H."/>
            <person name="Toyoshima-Morimoto F."/>
            <person name="Taniguchi E."/>
            <person name="Nishida E."/>
        </authorList>
    </citation>
    <scope>FUNCTION IN PHOSPHORYLATION OF PKMYT1</scope>
</reference>
<reference key="16">
    <citation type="journal article" date="2003" name="J. Cell Biol.">
        <title>Phosphorylation of mitotic kinesin-like protein 2 by polo-like kinase 1 is required for cytokinesis.</title>
        <authorList>
            <person name="Neef R."/>
            <person name="Preisinger C."/>
            <person name="Sutcliffe J."/>
            <person name="Kopajtich R."/>
            <person name="Nigg E.A."/>
            <person name="Mayer T.U."/>
            <person name="Barr F.A."/>
        </authorList>
    </citation>
    <scope>FUNCTION IN PHOSPHORYLATION OF KIF20A</scope>
    <scope>DOMAIN POLO BOX</scope>
    <scope>SUBCELLULAR LOCATION</scope>
</reference>
<reference key="17">
    <citation type="journal article" date="2003" name="Nat. Cell Biol.">
        <title>Active cyclin B1-Cdk1 first appears on centrosomes in prophase.</title>
        <authorList>
            <person name="Jackman M."/>
            <person name="Lindon C."/>
            <person name="Nigg E.A."/>
            <person name="Pines J."/>
        </authorList>
    </citation>
    <scope>FUNCTION IN PHOSPHORYLATION OF CCNB1</scope>
    <scope>SUBCELLULAR LOCATION</scope>
</reference>
<reference key="18">
    <citation type="journal article" date="2003" name="Nature">
        <title>Proteomic characterization of the human centrosome by protein correlation profiling.</title>
        <authorList>
            <person name="Andersen J.S."/>
            <person name="Wilkinson C.J."/>
            <person name="Mayor T."/>
            <person name="Mortensen P."/>
            <person name="Nigg E.A."/>
            <person name="Mann M."/>
        </authorList>
    </citation>
    <scope>IDENTIFICATION BY MASS SPECTROMETRY</scope>
    <scope>SUBCELLULAR LOCATION [LARGE SCALE ANALYSIS]</scope>
    <source>
        <tissue>Lymphoblast</tissue>
    </source>
</reference>
<reference key="19">
    <citation type="journal article" date="2004" name="J. Cell Biol.">
        <title>Ordered proteolysis in anaphase inactivates Plk1 to contribute to proper mitotic exit in human cells.</title>
        <authorList>
            <person name="Lindon C."/>
            <person name="Pines J."/>
        </authorList>
    </citation>
    <scope>FUNCTION</scope>
    <scope>PROTEASOMAL DEGRADATION</scope>
    <scope>DOMAIN D-BOX MOTIF</scope>
    <scope>MUTAGENESIS OF ARG-337 AND LEU-340</scope>
</reference>
<reference key="20">
    <citation type="journal article" date="2004" name="Mol. Biol. Cell">
        <title>Plk1 regulates activation of the anaphase promoting complex by phosphorylating and triggering SCFbetaTrCP-dependent destruction of the APC inhibitor Emi1.</title>
        <authorList>
            <person name="Hansen D.V."/>
            <person name="Loktev A.V."/>
            <person name="Ban K.H."/>
            <person name="Jackson P.K."/>
        </authorList>
    </citation>
    <scope>FUNCTION IN PHOSPHORYLATION OF FBXO5</scope>
</reference>
<reference key="21">
    <citation type="journal article" date="2004" name="Proc. Natl. Acad. Sci. U.S.A.">
        <title>M-phase kinases induce phospho-dependent ubiquitination of somatic Wee1 by SCFbeta-TrCP.</title>
        <authorList>
            <person name="Watanabe N."/>
            <person name="Arai H."/>
            <person name="Nishihara Y."/>
            <person name="Taniguchi M."/>
            <person name="Watanabe N."/>
            <person name="Hunter T."/>
            <person name="Osada H."/>
        </authorList>
    </citation>
    <scope>FUNCTION IN PHOSPHORYLATION OF WEE1</scope>
</reference>
<reference key="22">
    <citation type="journal article" date="2004" name="Proc. Natl. Acad. Sci. U.S.A.">
        <title>Role of Polo-like kinase in the degradation of early mitotic inhibitor 1, a regulator of the anaphase promoting complex/cyclosome.</title>
        <authorList>
            <person name="Moshe Y."/>
            <person name="Boulaire J."/>
            <person name="Pagano M."/>
            <person name="Hershko A."/>
        </authorList>
    </citation>
    <scope>FUNCTION IN PHOSPHORYLATION OF FBXO5</scope>
</reference>
<reference key="23">
    <citation type="journal article" date="2005" name="Dev. Cell">
        <title>Cdk1/Erk2- and Plk1-dependent phosphorylation of a centrosome protein, Cep55, is required for its recruitment to midbody and cytokinesis.</title>
        <authorList>
            <person name="Fabbro M."/>
            <person name="Zhou B.-B."/>
            <person name="Takahashi M."/>
            <person name="Sarcevic B."/>
            <person name="Lal P."/>
            <person name="Graham M.E."/>
            <person name="Gabrielli B.G."/>
            <person name="Robinson P.J."/>
            <person name="Nigg E.A."/>
            <person name="Ono Y."/>
            <person name="Khanna K.K."/>
        </authorList>
    </citation>
    <scope>FUNCTION IN PHOSPHORYLATION OF CEP55</scope>
</reference>
<reference key="24">
    <citation type="journal article" date="2005" name="J. Biol. Chem.">
        <title>Polo-like kinase 1 phosphorylates heat shock transcription factor 1 and mediates its nuclear translocation during heat stress.</title>
        <authorList>
            <person name="Kim S.A."/>
            <person name="Yoon J.H."/>
            <person name="Lee S.H."/>
            <person name="Ahn S.G."/>
        </authorList>
    </citation>
    <scope>FUNCTION IN PHOSPHORYLATION OF HSF1</scope>
</reference>
<reference key="25">
    <citation type="journal article" date="2005" name="Mol. Biol. Cell">
        <title>The forkhead-associated domain protein Cep170 interacts with Polo-like kinase 1 and serves as a marker for mature centrioles.</title>
        <authorList>
            <person name="Guarguaglini G."/>
            <person name="Duncan P.I."/>
            <person name="Stierhof Y.D."/>
            <person name="Holmstroem T."/>
            <person name="Duensing S."/>
            <person name="Nigg E.A."/>
        </authorList>
    </citation>
    <scope>INTERACTION WITH CEP170</scope>
</reference>
<reference key="26">
    <citation type="journal article" date="2006" name="Cell">
        <title>The evi5 oncogene regulates cyclin accumulation by stabilizing the anaphase-promoting complex inhibitor emi1.</title>
        <authorList>
            <person name="Eldridge A.G."/>
            <person name="Loktev A.V."/>
            <person name="Hansen D.V."/>
            <person name="Verschuren E.W."/>
            <person name="Reimann J.D.R."/>
            <person name="Jackson P.K."/>
        </authorList>
    </citation>
    <scope>INTERACTION WITH EVI5</scope>
</reference>
<reference key="27">
    <citation type="journal article" date="2006" name="Mol. Biol. Cell">
        <title>Phosphorylation- and polo-box-dependent binding of Plk1 to Bub1 is required for the kinetochore localization of Plk1.</title>
        <authorList>
            <person name="Qi W."/>
            <person name="Tang Z."/>
            <person name="Yu H."/>
        </authorList>
    </citation>
    <scope>SUBCELLULAR LOCATION</scope>
    <scope>INTERACTION WITH BUB1</scope>
    <scope>MUTAGENESIS OF HIS-538 AND LYS-540</scope>
</reference>
<reference key="28">
    <citation type="journal article" date="2006" name="Nat. Cell Biol.">
        <title>The Plk1 target Kizuna stabilizes mitotic centrosomes to ensure spindle bipolarity.</title>
        <authorList>
            <person name="Oshimori N."/>
            <person name="Ohsugi M."/>
            <person name="Yamamoto T."/>
        </authorList>
    </citation>
    <scope>FUNCTION IN PHOSPHORYLATION OF KIZ</scope>
</reference>
<reference key="29">
    <citation type="journal article" date="2006" name="Oncogene">
        <title>Phosphorylation of the cytokinesis regulator ECT2 at G2/M phase stimulates association of the mitotic kinase Plk1 and accumulation of GTP-bound RhoA.</title>
        <authorList>
            <person name="Niiya F."/>
            <person name="Tatsumoto T."/>
            <person name="Lee K.S."/>
            <person name="Miki T."/>
        </authorList>
    </citation>
    <scope>FUNCTION IN PHOSPHORYLATION OF ECT2</scope>
</reference>
<reference key="30">
    <citation type="journal article" date="2006" name="Mol. Cell">
        <title>Self-regulated Plk1 recruitment to kinetochores by the Plk1-PBIP1 interaction is critical for proper chromosome segregation.</title>
        <authorList>
            <person name="Kang Y.H."/>
            <person name="Park J.-E."/>
            <person name="Yu L.-R."/>
            <person name="Soung N.-K."/>
            <person name="Yun S.-M."/>
            <person name="Bang J.K."/>
            <person name="Seong Y.-S."/>
            <person name="Yu H."/>
            <person name="Garfield S."/>
            <person name="Veenstra T.D."/>
            <person name="Lee K.S."/>
        </authorList>
    </citation>
    <scope>FUNCTION IN PHOSPHORYLATION OF CENPU</scope>
</reference>
<reference key="31">
    <citation type="journal article" date="2006" name="Oncology">
        <title>Expression of polo-like kinase 1 (PLK1) protein predicts the survival of patients with gastric carcinoma.</title>
        <authorList>
            <person name="Kanaji S."/>
            <person name="Saito H."/>
            <person name="Tsujitani S."/>
            <person name="Matsumoto S."/>
            <person name="Tatebe S."/>
            <person name="Kondo A."/>
            <person name="Ozaki M."/>
            <person name="Ito H."/>
            <person name="Ikeguchi M."/>
        </authorList>
    </citation>
    <scope>INVOLVEMENT IN CANCER</scope>
</reference>
<reference key="32">
    <citation type="journal article" date="2007" name="Cancer Res.">
        <title>A cell proliferation and chromosomal instability signature in anaplastic thyroid carcinoma.</title>
        <authorList>
            <person name="Salvatore G."/>
            <person name="Nappi T.C."/>
            <person name="Salerno P."/>
            <person name="Jiang Y."/>
            <person name="Garbi C."/>
            <person name="Ugolini C."/>
            <person name="Miccoli P."/>
            <person name="Basolo F."/>
            <person name="Castellone M.D."/>
            <person name="Cirafici A.M."/>
            <person name="Melillo R.M."/>
            <person name="Fusco A."/>
            <person name="Bittner M.L."/>
            <person name="Santoro M."/>
        </authorList>
    </citation>
    <scope>INVOLVEMENT IN CANCER</scope>
</reference>
<reference key="33">
    <citation type="journal article" date="2007" name="Cell">
        <title>PICH, a centromere-associated SNF2 family ATPase, is regulated by Plk1 and required for the spindle checkpoint.</title>
        <authorList>
            <person name="Baumann C."/>
            <person name="Koerner R."/>
            <person name="Hofmann K."/>
            <person name="Nigg E.A."/>
        </authorList>
    </citation>
    <scope>FUNCTION</scope>
</reference>
<reference key="34">
    <citation type="journal article" date="2007" name="Cell Cycle">
        <title>Shugoshin 1 plays a central role in kinetochore assembly and is required for kinetochore targeting of Plk1.</title>
        <authorList>
            <person name="Pouwels J."/>
            <person name="Kukkonen A.M."/>
            <person name="Lan W."/>
            <person name="Daum J.R."/>
            <person name="Gorbsky G.J."/>
            <person name="Stukenberg T."/>
            <person name="Kallio M.J."/>
        </authorList>
    </citation>
    <scope>FUNCTION</scope>
    <scope>SUBCELLULAR LOCATION</scope>
</reference>
<reference key="35">
    <citation type="journal article" date="2007" name="Cell. Mol. Life Sci.">
        <title>TTDN1 is a Plk1-interacting protein involved in maintenance of cell cycle integrity.</title>
        <authorList>
            <person name="Zhang Y."/>
            <person name="Tian Y."/>
            <person name="Chen Q."/>
            <person name="Chen D."/>
            <person name="Zhai Z."/>
            <person name="Shu H.-B."/>
        </authorList>
    </citation>
    <scope>INTERACTION WITH TTDN1</scope>
</reference>
<reference key="36">
    <citation type="journal article" date="2007" name="J. Biol. Chem.">
        <title>Polo-like kinase 1 facilitates chromosome alignment during prometaphase through BubR1.</title>
        <authorList>
            <person name="Matsumura S."/>
            <person name="Toyoshima F."/>
            <person name="Nishida E."/>
        </authorList>
    </citation>
    <scope>FUNCTION IN PHOSPHORYLATION OF BUB1B</scope>
</reference>
<reference key="37">
    <citation type="journal article" date="2007" name="Leuk. Lymphoma">
        <title>Expression of PLK1 and survivin in diffuse large B-cell lymphoma.</title>
        <authorList>
            <person name="Liu L."/>
            <person name="Zhang M."/>
            <person name="Zou P."/>
        </authorList>
    </citation>
    <scope>INVOLVEMENT IN CANCER</scope>
</reference>
<reference key="38">
    <citation type="journal article" date="2007" name="Nat. Cell Biol.">
        <title>Choice of Plk1 docking partners during mitosis and cytokinesis is controlled by the activation state of Cdk1.</title>
        <authorList>
            <person name="Neef R."/>
            <person name="Gruneberg U."/>
            <person name="Kopajtich R."/>
            <person name="Li X."/>
            <person name="Nigg E.A."/>
            <person name="Sillje H."/>
            <person name="Barr F.A."/>
        </authorList>
    </citation>
    <scope>FUNCTION IN PHOSPHORYLATION OF PRC1</scope>
    <scope>DOMAIN POLO BOX</scope>
</reference>
<reference key="39">
    <citation type="journal article" date="2007" name="Proc. Natl. Acad. Sci. U.S.A.">
        <title>The tumor suppressor CYLD regulates entry into mitosis.</title>
        <authorList>
            <person name="Stegmeier F."/>
            <person name="Sowa M.E."/>
            <person name="Nalepa G."/>
            <person name="Gygi S.P."/>
            <person name="Harper J.W."/>
            <person name="Elledge S.J."/>
        </authorList>
    </citation>
    <scope>INTERACTION WITH CYLD</scope>
    <scope>IDENTIFICATION BY MASS SPECTROMETRY</scope>
</reference>
<reference key="40">
    <citation type="journal article" date="2008" name="Cancer Res.">
        <title>HSF1 as a mitotic regulator: phosphorylation of HSF1 by Plk1 is essential for mitotic progression.</title>
        <authorList>
            <person name="Lee Y.J."/>
            <person name="Kim E.H."/>
            <person name="Lee J.S."/>
            <person name="Jeoung D."/>
            <person name="Bae S."/>
            <person name="Kwon S.H."/>
            <person name="Lee Y.S."/>
        </authorList>
    </citation>
    <scope>FUNCTION IN PHOSPHORYLATION OF HSF1</scope>
    <scope>SUBCELLULAR LOCATION</scope>
</reference>
<reference key="41">
    <citation type="journal article" date="2008" name="Cell">
        <title>The Cdc14B-Cdh1-Plk1 axis controls the G2 DNA-damage-response checkpoint.</title>
        <authorList>
            <person name="Bassermann F."/>
            <person name="Frescas D."/>
            <person name="Guardavaccaro D."/>
            <person name="Busino L."/>
            <person name="Peschiaroli A."/>
            <person name="Pagano M."/>
        </authorList>
    </citation>
    <scope>FUNCTION</scope>
    <scope>UBIQUITINATION BY THE APC/C COMPLEX</scope>
    <scope>INTERACTION WITH FZR1</scope>
    <scope>MUTAGENESIS OF ARG-337 AND LEU-340</scope>
</reference>
<reference key="42">
    <citation type="journal article" date="2008" name="Cell">
        <title>Final stages of cytokinesis and midbody ring formation are controlled by BRUCE.</title>
        <authorList>
            <person name="Pohl C."/>
            <person name="Jentsch S."/>
        </authorList>
    </citation>
    <scope>INTERACTION WITH BIRC6/BRUCE</scope>
</reference>
<reference key="43">
    <citation type="journal article" date="2008" name="Cell Cycle">
        <title>p73-mediated transcriptional activity is negatively regulated by polo-like kinase 1.</title>
        <authorList>
            <person name="Soond S.M."/>
            <person name="Barry S.P."/>
            <person name="Melino G."/>
            <person name="Knight R.A."/>
            <person name="Latchman D.S."/>
            <person name="Stephanou A."/>
        </authorList>
    </citation>
    <scope>FUNCTION IN PHOSPHORYLATION OF TP73</scope>
</reference>
<reference key="44">
    <citation type="journal article" date="2008" name="Chromosoma">
        <title>Plk1 regulates mitotic Aurora A function through betaTrCP-dependent degradation of hBora.</title>
        <authorList>
            <person name="Chan E.H."/>
            <person name="Santamaria A."/>
            <person name="Sillje H.H."/>
            <person name="Nigg E.A."/>
        </authorList>
    </citation>
    <scope>FUNCTION</scope>
</reference>
<reference key="45">
    <citation type="journal article" date="2008" name="Dev. Cell">
        <title>sSgo1, a major splice variant of Sgo1, functions in centriole cohesion where it is regulated by Plk1.</title>
        <authorList>
            <person name="Wang X."/>
            <person name="Yang Y."/>
            <person name="Duan Q."/>
            <person name="Jiang N."/>
            <person name="Huang Y."/>
            <person name="Darzynkiewicz Z."/>
            <person name="Dai W."/>
        </authorList>
    </citation>
    <scope>FUNCTION IN PHOSPHORYLATION OF SGO1</scope>
</reference>
<reference key="46">
    <citation type="journal article" date="2008" name="Dev. Cell">
        <title>Myosin phosphatase-targeting subunit 1 regulates mitosis by antagonizing polo-like kinase 1.</title>
        <authorList>
            <person name="Yamashiro S."/>
            <person name="Yamakita Y."/>
            <person name="Totsukawa G."/>
            <person name="Goto H."/>
            <person name="Kaibuchi K."/>
            <person name="Ito M."/>
            <person name="Hartshorne D.J."/>
            <person name="Matsumura F."/>
        </authorList>
    </citation>
    <scope>FUNCTION IN PHOSPHORYLATION OF PPP1R12A</scope>
    <scope>PHOSPHORYLATION AT THR-210</scope>
    <scope>DEPHOSPHORYLATION BY PPP1C</scope>
    <scope>SUBCELLULAR LOCATION</scope>
    <scope>MUTAGENESIS OF HIS-538 AND LYS-540</scope>
</reference>
<reference key="47">
    <citation type="journal article" date="2008" name="J. Biol. Chem.">
        <title>Inhibitory role of Plk1 in the regulation of p73-dependent apoptosis through physical interaction and phosphorylation.</title>
        <authorList>
            <person name="Koida N."/>
            <person name="Ozaki T."/>
            <person name="Yamamoto H."/>
            <person name="Ono S."/>
            <person name="Koda T."/>
            <person name="Ando K."/>
            <person name="Okoshi R."/>
            <person name="Kamijo T."/>
            <person name="Omura K."/>
            <person name="Nakagawara A."/>
        </authorList>
    </citation>
    <scope>FUNCTION IN PHOSPHORYLATION OF TP73</scope>
    <scope>MUTAGENESIS OF LYS-82</scope>
</reference>
<reference key="48">
    <citation type="journal article" date="2008" name="J. Cell Biol.">
        <title>FAM29A promotes microtubule amplification via recruitment of the NEDD1-gamma-tubulin complex to the mitotic spindle.</title>
        <authorList>
            <person name="Zhu H."/>
            <person name="Coppinger J.A."/>
            <person name="Jang C.-Y."/>
            <person name="Yates J.R. III"/>
            <person name="Fang G."/>
        </authorList>
    </citation>
    <scope>INTERACTION WITH FAM29A</scope>
</reference>
<reference key="49">
    <citation type="journal article" date="2008" name="Mol. Cell">
        <title>Kinase-selective enrichment enables quantitative phosphoproteomics of the kinome across the cell cycle.</title>
        <authorList>
            <person name="Daub H."/>
            <person name="Olsen J.V."/>
            <person name="Bairlein M."/>
            <person name="Gnad F."/>
            <person name="Oppermann F.S."/>
            <person name="Korner R."/>
            <person name="Greff Z."/>
            <person name="Keri G."/>
            <person name="Stemmann O."/>
            <person name="Mann M."/>
        </authorList>
    </citation>
    <scope>PHOSPHORYLATION [LARGE SCALE ANALYSIS] AT THR-6; SER-103; THR-210; THR-214; SER-375; SER-450 AND THR-498</scope>
    <scope>IDENTIFICATION BY MASS SPECTROMETRY [LARGE SCALE ANALYSIS]</scope>
    <source>
        <tissue>Cervix carcinoma</tissue>
    </source>
</reference>
<reference key="50">
    <citation type="journal article" date="2008" name="Nat. Cell Biol.">
        <title>Plk1-dependent phosphorylation of FoxM1 regulates a transcriptional programme required for mitotic progression.</title>
        <authorList>
            <person name="Fu Z."/>
            <person name="Malureanu L."/>
            <person name="Huang J."/>
            <person name="Wang W."/>
            <person name="Li H."/>
            <person name="van Deursen J.M."/>
            <person name="Tindall D.J."/>
            <person name="Chen J."/>
        </authorList>
    </citation>
    <scope>FUNCTION IN PHOSPHORYLATION OF FOXM1</scope>
    <scope>MUTAGENESIS OF LYS-82 AND THR-210</scope>
</reference>
<reference key="51">
    <citation type="journal article" date="2008" name="Nature">
        <title>Polo-like kinase-1 is activated by aurora A to promote checkpoint recovery.</title>
        <authorList>
            <person name="Macurek L."/>
            <person name="Lindqvist A."/>
            <person name="Lim D."/>
            <person name="Lampson M.A."/>
            <person name="Klompmaker R."/>
            <person name="Freire R."/>
            <person name="Clouin C."/>
            <person name="Taylor S.S."/>
            <person name="Yaffe M.B."/>
            <person name="Medema R.H."/>
        </authorList>
    </citation>
    <scope>FUNCTION</scope>
    <scope>ACTIVITY REGULATION</scope>
    <scope>PHOSPHORYLATION AT THR-210 BY AURKA</scope>
    <scope>SUBCELLULAR LOCATION</scope>
    <scope>MUTAGENESIS OF LYS-82; SER-137; ASP-176 AND THR-210</scope>
    <scope>ACTIVE SITE</scope>
</reference>
<reference key="52">
    <citation type="journal article" date="2008" name="Proc. Natl. Acad. Sci. U.S.A.">
        <title>A quantitative atlas of mitotic phosphorylation.</title>
        <authorList>
            <person name="Dephoure N."/>
            <person name="Zhou C."/>
            <person name="Villen J."/>
            <person name="Beausoleil S.A."/>
            <person name="Bakalarski C.E."/>
            <person name="Elledge S.J."/>
            <person name="Gygi S.P."/>
        </authorList>
    </citation>
    <scope>PHOSPHORYLATION [LARGE SCALE ANALYSIS] AT THR-210 AND THR-214</scope>
    <scope>IDENTIFICATION BY MASS SPECTROMETRY [LARGE SCALE ANALYSIS]</scope>
    <source>
        <tissue>Cervix carcinoma</tissue>
    </source>
</reference>
<reference key="53">
    <citation type="journal article" date="2009" name="Cell">
        <title>Mammalian BTBD12/SLX4 assembles a Holliday junction resolvase and is required for DNA repair.</title>
        <authorList>
            <person name="Svendsen J.M."/>
            <person name="Smogorzewska A."/>
            <person name="Sowa M.E."/>
            <person name="O'Connell B.C."/>
            <person name="Gygi S.P."/>
            <person name="Elledge S.J."/>
            <person name="Harper J.W."/>
        </authorList>
    </citation>
    <scope>INTERACTION WITH SLX4</scope>
</reference>
<reference key="54">
    <citation type="journal article" date="2009" name="J. Biol. Chem.">
        <title>Plk1-mediated phosphorylation of Topors regulates p53 stability.</title>
        <authorList>
            <person name="Yang X."/>
            <person name="Li H."/>
            <person name="Zhou Z."/>
            <person name="Wang W.H."/>
            <person name="Deng A."/>
            <person name="Andrisani O."/>
            <person name="Liu X."/>
        </authorList>
    </citation>
    <scope>FUNCTION IN PHOSPHORYLATION OF TOPORS</scope>
</reference>
<reference key="55">
    <citation type="journal article" date="2009" name="J. Cell Sci.">
        <title>Sequential phosphorylation of Nedd1 by Cdk1 and Plk1 is required for targeting of the gammaTuRC to the centrosome.</title>
        <authorList>
            <person name="Zhang X."/>
            <person name="Chen Q."/>
            <person name="Feng J."/>
            <person name="Hou J."/>
            <person name="Yang F."/>
            <person name="Liu J."/>
            <person name="Jiang Q."/>
            <person name="Zhang C."/>
        </authorList>
    </citation>
    <scope>FUNCTION AS NEDD1 KINASE</scope>
</reference>
<reference key="56">
    <citation type="journal article" date="2009" name="J. Cell Sci.">
        <title>Plk1 and Aurora A regulate the depolymerase activity and the cellular localization of Kif2a.</title>
        <authorList>
            <person name="Jang C.Y."/>
            <person name="Coppinger J.A."/>
            <person name="Seki A."/>
            <person name="Yates J.R. III"/>
            <person name="Fang G."/>
        </authorList>
    </citation>
    <scope>FUNCTION</scope>
    <scope>INTERACTION WITH KIF2A</scope>
    <scope>SUBCELLULAR LOCATION</scope>
</reference>
<reference key="57">
    <citation type="journal article" date="2009" name="Mol. Cell. Proteomics">
        <title>Large-scale proteomics analysis of the human kinome.</title>
        <authorList>
            <person name="Oppermann F.S."/>
            <person name="Gnad F."/>
            <person name="Olsen J.V."/>
            <person name="Hornberger R."/>
            <person name="Greff Z."/>
            <person name="Keri G."/>
            <person name="Mann M."/>
            <person name="Daub H."/>
        </authorList>
    </citation>
    <scope>PHOSPHORYLATION [LARGE SCALE ANALYSIS] AT THR-210 AND THR-214</scope>
    <scope>IDENTIFICATION BY MASS SPECTROMETRY [LARGE SCALE ANALYSIS]</scope>
</reference>
<reference key="58">
    <citation type="journal article" date="2009" name="PLoS Biol.">
        <title>Polo-like kinase 1 directs assembly of the HsCyk-4 RhoGAP/Ect2 RhoGEF complex to initiate cleavage furrow formation.</title>
        <authorList>
            <person name="Wolfe B.A."/>
            <person name="Takaki T."/>
            <person name="Petronczki M."/>
            <person name="Glotzer M."/>
        </authorList>
    </citation>
    <scope>FUNCTION IN PHOSPHORYLATION OF RACGAP1</scope>
    <scope>SUBCELLULAR LOCATION</scope>
</reference>
<reference key="59">
    <citation type="journal article" date="2009" name="PLoS Biol.">
        <title>Plk1 self-organization and priming phosphorylation of HsCYK-4 at the spindle midzone regulate the onset of division in human cells.</title>
        <authorList>
            <person name="Burkard M.E."/>
            <person name="Maciejowski J."/>
            <person name="Rodriguez-Bravo V."/>
            <person name="Repka M."/>
            <person name="Lowery D.M."/>
            <person name="Clauser K.R."/>
            <person name="Zhang C."/>
            <person name="Shokat K.M."/>
            <person name="Carr S.A."/>
            <person name="Yaffe M.B."/>
            <person name="Jallepalli P.V."/>
        </authorList>
    </citation>
    <scope>FUNCTION IN PHOSPHORYLATION OF RACGAP1</scope>
    <scope>SUBCELLULAR LOCATION</scope>
    <scope>MUTAGENESIS OF CYS-67; LEU-130; HIS-538 AND LYS-540</scope>
</reference>
<reference key="60">
    <citation type="journal article" date="2010" name="Nat. Rev. Drug Discov.">
        <title>Multifaceted polo-like kinases: drug targets and antitargets for cancer therapy.</title>
        <authorList>
            <person name="Strebhardt K."/>
        </authorList>
    </citation>
    <scope>REVIEW ON FUNCTION</scope>
    <scope>REVIEW ON ACTIVITY REGULATION</scope>
</reference>
<reference key="61">
    <citation type="journal article" date="2010" name="Proc. Natl. Acad. Sci. U.S.A.">
        <title>Polo-like kinase 1 phosphorylation of p150Glued facilitates nuclear envelope breakdown during prophase.</title>
        <authorList>
            <person name="Li H."/>
            <person name="Liu X.S."/>
            <person name="Yang X."/>
            <person name="Song B."/>
            <person name="Wang Y."/>
            <person name="Liu X."/>
        </authorList>
    </citation>
    <scope>FUNCTION IN PHOSPHORYLATION OF DCTN1</scope>
    <scope>INTERACTION WITH DCTN1</scope>
</reference>
<reference key="62">
    <citation type="journal article" date="2010" name="Sci. Signal.">
        <title>Quantitative phosphoproteomics reveals widespread full phosphorylation site occupancy during mitosis.</title>
        <authorList>
            <person name="Olsen J.V."/>
            <person name="Vermeulen M."/>
            <person name="Santamaria A."/>
            <person name="Kumar C."/>
            <person name="Miller M.L."/>
            <person name="Jensen L.J."/>
            <person name="Gnad F."/>
            <person name="Cox J."/>
            <person name="Jensen T.S."/>
            <person name="Nigg E.A."/>
            <person name="Brunak S."/>
            <person name="Mann M."/>
        </authorList>
    </citation>
    <scope>PHOSPHORYLATION [LARGE SCALE ANALYSIS] AT THR-210</scope>
    <scope>IDENTIFICATION BY MASS SPECTROMETRY [LARGE SCALE ANALYSIS]</scope>
    <source>
        <tissue>Cervix carcinoma</tissue>
    </source>
</reference>
<reference key="63">
    <citation type="journal article" date="2011" name="BMC Syst. Biol.">
        <title>Initial characterization of the human central proteome.</title>
        <authorList>
            <person name="Burkard T.R."/>
            <person name="Planyavsky M."/>
            <person name="Kaupe I."/>
            <person name="Breitwieser F.P."/>
            <person name="Buerckstuemmer T."/>
            <person name="Bennett K.L."/>
            <person name="Superti-Furga G."/>
            <person name="Colinge J."/>
        </authorList>
    </citation>
    <scope>IDENTIFICATION BY MASS SPECTROMETRY [LARGE SCALE ANALYSIS]</scope>
</reference>
<reference key="64">
    <citation type="journal article" date="2011" name="Cell Cycle">
        <title>Phosphorylation of Ataxin-10 by polo-like kinase 1 is required for cytokinesis.</title>
        <authorList>
            <person name="Li J."/>
            <person name="Wang J."/>
            <person name="Hou W."/>
            <person name="Jing Z."/>
            <person name="Tian C."/>
            <person name="Han Y."/>
            <person name="Liao J."/>
            <person name="Dong M.Q."/>
            <person name="Xu X."/>
        </authorList>
    </citation>
    <scope>FUNCTION</scope>
</reference>
<reference key="65">
    <citation type="journal article" date="2011" name="J. Biol. Chem.">
        <title>Phosphorylation of right open reading frame 2 (Rio2) protein kinase by polo-like kinase 1 regulates mitotic progression.</title>
        <authorList>
            <person name="Liu T."/>
            <person name="Deng M."/>
            <person name="Li J."/>
            <person name="Tong X."/>
            <person name="Wei Q."/>
            <person name="Ye X."/>
        </authorList>
    </citation>
    <scope>FUNCTION IN PHOSPHORYLATION OF RIOK2</scope>
    <scope>MUTAGENESIS OF LYS-82</scope>
</reference>
<reference key="66">
    <citation type="journal article" date="2011" name="J. Cell Biol.">
        <title>The astrin-kinastrin/SKAP complex localizes to microtubule plus ends and facilitates chromosome alignment.</title>
        <authorList>
            <person name="Dunsch A.K."/>
            <person name="Linnane E."/>
            <person name="Barr F.A."/>
            <person name="Gruneberg U."/>
        </authorList>
    </citation>
    <scope>IDENTIFICATION IN A COMPLEX WITH KNSTRN; SPAG5; DYNLL1 AND SGO2</scope>
</reference>
<reference key="67">
    <citation type="journal article" date="2012" name="J. Biol. Chem.">
        <title>Furry protein promotes Aurora A-mediated polo-like kinase 1 activation.</title>
        <authorList>
            <person name="Ikeda M."/>
            <person name="Chiba S."/>
            <person name="Ohashi K."/>
            <person name="Mizuno K."/>
        </authorList>
    </citation>
    <scope>INTERACTION WITH FRY</scope>
    <scope>SUBCELLULAR LOCATION</scope>
    <scope>MUTAGENESIS OF ASP-194</scope>
</reference>
<reference key="68">
    <citation type="journal article" date="2012" name="Mol. Cell">
        <title>Plk1 and CK2 act in concert to regulate Rad51 during DNA double strand break repair.</title>
        <authorList>
            <person name="Yata K."/>
            <person name="Lloyd J."/>
            <person name="Maslen S."/>
            <person name="Bleuyard J.Y."/>
            <person name="Skehel M."/>
            <person name="Smerdon S.J."/>
            <person name="Esashi F."/>
        </authorList>
    </citation>
    <scope>FUNCTION</scope>
    <scope>CATALYTIC ACTIVITY</scope>
</reference>
<reference key="69">
    <citation type="journal article" date="2012" name="Proc. Natl. Acad. Sci. U.S.A.">
        <title>N-terminal acetylome analyses and functional insights of the N-terminal acetyltransferase NatB.</title>
        <authorList>
            <person name="Van Damme P."/>
            <person name="Lasa M."/>
            <person name="Polevoda B."/>
            <person name="Gazquez C."/>
            <person name="Elosegui-Artola A."/>
            <person name="Kim D.S."/>
            <person name="De Juan-Pardo E."/>
            <person name="Demeyer K."/>
            <person name="Hole K."/>
            <person name="Larrea E."/>
            <person name="Timmerman E."/>
            <person name="Prieto J."/>
            <person name="Arnesen T."/>
            <person name="Sherman F."/>
            <person name="Gevaert K."/>
            <person name="Aldabe R."/>
        </authorList>
    </citation>
    <scope>ACETYLATION [LARGE SCALE ANALYSIS] AT SER-2</scope>
    <scope>CLEAVAGE OF INITIATOR METHIONINE [LARGE SCALE ANALYSIS]</scope>
    <scope>IDENTIFICATION BY MASS SPECTROMETRY [LARGE SCALE ANALYSIS]</scope>
</reference>
<reference key="70">
    <citation type="journal article" date="2013" name="Cell Cycle">
        <title>CUL3 and protein kinases: insights from PLK1/KLHL22 interaction.</title>
        <authorList>
            <person name="Metzger T."/>
            <person name="Kleiss C."/>
            <person name="Sumara I."/>
        </authorList>
    </citation>
    <scope>INTERACTION WITH KLHL22</scope>
</reference>
<reference key="71">
    <citation type="journal article" date="2013" name="Cell Res.">
        <title>Centrosomal protein FOR20 is essential for S-phase progression by recruiting Plk1 to centrosomes.</title>
        <authorList>
            <person name="Shen M."/>
            <person name="Cai Y."/>
            <person name="Yang Y."/>
            <person name="Yan X."/>
            <person name="Liu X."/>
            <person name="Zhou T."/>
        </authorList>
    </citation>
    <scope>INTERACTION WITH CEP20</scope>
    <scope>SUBCELLULAR LOCATION</scope>
    <scope>MUTAGENESIS OF LYS-82; TRP-414; VAL-415 AND LEU-427</scope>
</reference>
<reference key="72">
    <citation type="journal article" date="2013" name="EMBO J.">
        <title>Dynactin helps target Polo-like kinase 1 to kinetochores via its left-handed beta-helical p27 subunit.</title>
        <authorList>
            <person name="Yeh T.Y."/>
            <person name="Kowalska A.K."/>
            <person name="Scipioni B.R."/>
            <person name="Cheong F.K."/>
            <person name="Zheng M."/>
            <person name="Derewenda U."/>
            <person name="Derewenda Z.S."/>
            <person name="Schroer T.A."/>
        </authorList>
    </citation>
    <scope>INTERACTION WITH DCTN6</scope>
    <scope>SUBCELLULAR LOCATION</scope>
</reference>
<reference key="73">
    <citation type="journal article" date="2013" name="J. Cell Biol.">
        <title>MISP is a novel Plk1 substrate required for proper spindle orientation and mitotic progression.</title>
        <authorList>
            <person name="Zhu M."/>
            <person name="Settele F."/>
            <person name="Kotak S."/>
            <person name="Sanchez-Pulido L."/>
            <person name="Ehret L."/>
            <person name="Ponting C.P."/>
            <person name="Goenczy P."/>
            <person name="Hoffmann I."/>
        </authorList>
    </citation>
    <scope>FUNCTION IN PHOSPHORYLATION OF MISP</scope>
</reference>
<reference key="74">
    <citation type="journal article" date="2013" name="J. Proteome Res.">
        <title>Toward a comprehensive characterization of a human cancer cell phosphoproteome.</title>
        <authorList>
            <person name="Zhou H."/>
            <person name="Di Palma S."/>
            <person name="Preisinger C."/>
            <person name="Peng M."/>
            <person name="Polat A.N."/>
            <person name="Heck A.J."/>
            <person name="Mohammed S."/>
        </authorList>
    </citation>
    <scope>PHOSPHORYLATION [LARGE SCALE ANALYSIS] AT THR-210</scope>
    <scope>IDENTIFICATION BY MASS SPECTROMETRY [LARGE SCALE ANALYSIS]</scope>
    <source>
        <tissue>Cervix carcinoma</tissue>
        <tissue>Erythroleukemia</tissue>
    </source>
</reference>
<reference key="75">
    <citation type="journal article" date="2013" name="Nat. Cell Biol.">
        <title>Ubiquitylation-dependent localization of PLK1 in mitosis.</title>
        <authorList>
            <person name="Beck J."/>
            <person name="Maerki S."/>
            <person name="Posch M."/>
            <person name="Metzger T."/>
            <person name="Persaud A."/>
            <person name="Scheel H."/>
            <person name="Hofmann K."/>
            <person name="Rotin D."/>
            <person name="Pedrioli P."/>
            <person name="Swedlow J.R."/>
            <person name="Peter M."/>
            <person name="Sumara I."/>
        </authorList>
    </citation>
    <scope>FUNCTION</scope>
    <scope>INTERACTION WITH KLHL22</scope>
    <scope>SUBCELLULAR LOCATION</scope>
    <scope>UBIQUITINATION AT LYS-9 AND LYS-492</scope>
    <scope>MUTAGENESIS OF LYS-492</scope>
</reference>
<reference key="76">
    <citation type="journal article" date="2015" name="Mol. Cell. Biol.">
        <title>Phosphorylation of SAF-A/hnRNP-U serine 59 by polo-like kinase 1 is required for mitosis.</title>
        <authorList>
            <person name="Douglas P."/>
            <person name="Ye R."/>
            <person name="Morrice N."/>
            <person name="Britton S."/>
            <person name="Trinkle-Mulcahy L."/>
            <person name="Lees-Miller S.P."/>
        </authorList>
    </citation>
    <scope>FUNCTION IN PHOSPHORYLATION OF HNRNPU</scope>
</reference>
<reference key="77">
    <citation type="journal article" date="2015" name="Mol. Cell. Proteomics">
        <title>Myotubularin-related proteins 3 and 4 interact with polo-like kinase 1 and centrosomal protein of 55 kDa to ensure proper abscission.</title>
        <authorList>
            <person name="St-Denis N."/>
            <person name="Gupta G.D."/>
            <person name="Lin Z.Y."/>
            <person name="Gonzalez-Badillo B."/>
            <person name="Pelletier L."/>
            <person name="Gingras A.C."/>
        </authorList>
    </citation>
    <scope>INTERACTION WITH MTMR3 AND MTMR4</scope>
</reference>
<reference key="78">
    <citation type="journal article" date="2015" name="Nat. Cell Biol.">
        <title>Degradation of Cep68 and PCNT cleavage mediate Cep215 removal from the PCM to allow centriole separation, disengagement and licensing.</title>
        <authorList>
            <person name="Pagan J.K."/>
            <person name="Marzio A."/>
            <person name="Jones M.J."/>
            <person name="Saraf A."/>
            <person name="Jallepalli P.V."/>
            <person name="Florens L."/>
            <person name="Washburn M.P."/>
            <person name="Pagano M."/>
        </authorList>
    </citation>
    <scope>FUNCTION</scope>
    <scope>INTERACTION WITH CEP68</scope>
</reference>
<reference key="79">
    <citation type="journal article" date="2016" name="J. Cell Biol.">
        <title>TOPBP1 regulates RAD51 phosphorylation and chromatin loading and determines PARP inhibitor sensitivity.</title>
        <authorList>
            <person name="Moudry P."/>
            <person name="Watanabe K."/>
            <person name="Wolanin K.M."/>
            <person name="Bartkova J."/>
            <person name="Wassing I.E."/>
            <person name="Watanabe S."/>
            <person name="Strauss R."/>
            <person name="Troelsgaard Pedersen R."/>
            <person name="Oestergaard V.H."/>
            <person name="Lisby M."/>
            <person name="Andujar-Sanchez M."/>
            <person name="Maya-Mendoza A."/>
            <person name="Esashi F."/>
            <person name="Lukas J."/>
            <person name="Bartek J."/>
        </authorList>
    </citation>
    <scope>FUNCTION</scope>
</reference>
<reference key="80">
    <citation type="journal article" date="2017" name="Cancer Res.">
        <title>Plk1 Phosphorylation of Mre11 Antagonizes the DNA Damage Response.</title>
        <authorList>
            <person name="Li Z."/>
            <person name="Li J."/>
            <person name="Kong Y."/>
            <person name="Yan S."/>
            <person name="Ahmad N."/>
            <person name="Liu X."/>
        </authorList>
    </citation>
    <scope>FUNCTION</scope>
    <scope>CATALYTIC ACTIVITY</scope>
</reference>
<reference key="81">
    <citation type="journal article" date="2017" name="J. Biol. Chem.">
        <title>DAZ-interacting Protein 1 (Dzip1) Phosphorylation by Polo-like Kinase 1 (Plk1) Regulates the Centriolar Satellite Localization of the BBSome Protein during the Cell Cycle.</title>
        <authorList>
            <person name="Zhang B."/>
            <person name="Wang G."/>
            <person name="Xu X."/>
            <person name="Yang S."/>
            <person name="Zhuang T."/>
            <person name="Wang G."/>
            <person name="Ren H."/>
            <person name="Cheng S.Y."/>
            <person name="Jiang Q."/>
            <person name="Zhang C."/>
        </authorList>
    </citation>
    <scope>FUNCTION</scope>
</reference>
<reference key="82">
    <citation type="journal article" date="2017" name="Nat. Struct. Mol. Biol.">
        <title>Site-specific mapping of the human SUMO proteome reveals co-modification with phosphorylation.</title>
        <authorList>
            <person name="Hendriks I.A."/>
            <person name="Lyon D."/>
            <person name="Young C."/>
            <person name="Jensen L.J."/>
            <person name="Vertegaal A.C."/>
            <person name="Nielsen M.L."/>
        </authorList>
    </citation>
    <scope>SUMOYLATION [LARGE SCALE ANALYSIS] AT LYS-338</scope>
    <scope>IDENTIFICATION BY MASS SPECTROMETRY [LARGE SCALE ANALYSIS]</scope>
</reference>
<reference key="83">
    <citation type="journal article" date="2018" name="J. Biol. Chem.">
        <title>Phosphorylation of human enhancer filamentation 1 (HEF1) stimulates interaction with Polo-like kinase 1 leading to HEF1 localization to focal adhesions.</title>
        <authorList>
            <person name="Lee K.H."/>
            <person name="Hwang J.A."/>
            <person name="Kim S.O."/>
            <person name="Kim J.H."/>
            <person name="Shin S.C."/>
            <person name="Kim E.E."/>
            <person name="Lee K.S."/>
            <person name="Rhee K."/>
            <person name="Jeon B.H."/>
            <person name="Bang J.K."/>
            <person name="Cha-Molstad H."/>
            <person name="Soung N.K."/>
            <person name="Jang J.H."/>
            <person name="Ko S.K."/>
            <person name="Lee H.G."/>
            <person name="Ahn J.S."/>
            <person name="Kwon Y.T."/>
            <person name="Kim B.Y."/>
        </authorList>
    </citation>
    <scope>INTERACTION WITH NEDD9</scope>
</reference>
<reference key="84">
    <citation type="journal article" date="2019" name="Brain">
        <title>Mutations in the microtubule-associated protein MAP11 (C7orf43) cause microcephaly in humans and zebrafish.</title>
        <authorList>
            <person name="Perez Y."/>
            <person name="Bar-Yaacov R."/>
            <person name="Kadir R."/>
            <person name="Wormser O."/>
            <person name="Shelef I."/>
            <person name="Birk O.S."/>
            <person name="Flusser H."/>
            <person name="Birnbaum R.Y."/>
        </authorList>
    </citation>
    <scope>SUBCELLULAR LOCATION</scope>
</reference>
<reference key="85">
    <citation type="journal article" date="2020" name="Cancer Res.">
        <title>SKA3 Promotes Cell Growth in Breast Cancer by Inhibiting PLK-1 Protein Degradation.</title>
        <authorList>
            <person name="Ruan L.W."/>
            <person name="Li P.P."/>
            <person name="Jin L.P."/>
        </authorList>
    </citation>
    <scope>INTERACTION WITH SKA3</scope>
</reference>
<reference key="86">
    <citation type="journal article" date="2021" name="Cell Rep.">
        <title>Feedback control of PLK1 by Apolo1 ensures accurate chromosome segregation.</title>
        <authorList>
            <person name="Xu L."/>
            <person name="Ali M."/>
            <person name="Duan W."/>
            <person name="Yuan X."/>
            <person name="Garba F."/>
            <person name="Mullen M."/>
            <person name="Sun B."/>
            <person name="Poser I."/>
            <person name="Duan H."/>
            <person name="Lu J."/>
            <person name="Tian R."/>
            <person name="Ge Y."/>
            <person name="Chu L."/>
            <person name="Pan W."/>
            <person name="Wang D."/>
            <person name="Hyman A."/>
            <person name="Green H."/>
            <person name="Li L."/>
            <person name="Dou Z."/>
            <person name="Liu D."/>
            <person name="Liu X."/>
            <person name="Yao X."/>
        </authorList>
    </citation>
    <scope>INTERACTION WITH FIRRM</scope>
</reference>
<reference key="87">
    <citation type="journal article" date="2023" name="Nature">
        <title>Poltheta is phosphorylated by PLK1 to repair double-strand breaks in mitosis.</title>
        <authorList>
            <person name="Gelot C."/>
            <person name="Kovacs M.T."/>
            <person name="Miron S."/>
            <person name="Mylne E."/>
            <person name="Haan A."/>
            <person name="Boeffard-Dosierre L."/>
            <person name="Ghouil R."/>
            <person name="Popova T."/>
            <person name="Dingli F."/>
            <person name="Loew D."/>
            <person name="Guirouilh-Barbat J."/>
            <person name="Del Nery E."/>
            <person name="Zinn-Justin S."/>
            <person name="Ceccaldi R."/>
        </authorList>
    </citation>
    <scope>FUNCTION</scope>
    <scope>CATALYTIC ACTIVITY</scope>
</reference>
<reference key="88">
    <citation type="journal article" date="2023" name="Science">
        <title>RHINO directs MMEJ to repair DNA breaks in mitosis.</title>
        <authorList>
            <person name="Brambati A."/>
            <person name="Sacco O."/>
            <person name="Porcella S."/>
            <person name="Heyza J."/>
            <person name="Kareh M."/>
            <person name="Schmidt J.C."/>
            <person name="Sfeir A."/>
        </authorList>
    </citation>
    <scope>FUNCTION</scope>
    <scope>CATALYTIC ACTIVITY</scope>
</reference>
<reference key="89">
    <citation type="journal article" date="2003" name="Cell">
        <title>The molecular basis for phosphodependent substrate targeting and regulation of Plks by the Polo-box domain.</title>
        <authorList>
            <person name="Elia A.E."/>
            <person name="Rellos P."/>
            <person name="Haire L.F."/>
            <person name="Chao J.W."/>
            <person name="Ivins F.J."/>
            <person name="Hoepker K."/>
            <person name="Mohammad D."/>
            <person name="Cantley L.C."/>
            <person name="Smerdon S.J."/>
            <person name="Yaffe M.B."/>
        </authorList>
    </citation>
    <scope>X-RAY CRYSTALLOGRAPHY (1.9 ANGSTROMS) OF 367-603 IN COMPLEX WITH PHOSPHORYLATED PEPTIDE</scope>
    <scope>FUNCTION</scope>
    <scope>SUBCELLULAR LOCATION</scope>
    <scope>DOMAIN POLO BOX</scope>
    <scope>INTERACTION WITH CDC25C</scope>
    <scope>MUTAGENESIS OF HIS-538 AND LYS-540</scope>
</reference>
<reference key="90">
    <citation type="journal article" date="2003" name="EMBO J.">
        <title>The crystal structure of the human polo-like kinase-1 polo box domain and its phospho-peptide complex.</title>
        <authorList>
            <person name="Cheng K.Y."/>
            <person name="Lowe E.D."/>
            <person name="Sinclair J."/>
            <person name="Nigg E.A."/>
            <person name="Johnson L.N."/>
        </authorList>
    </citation>
    <scope>X-RAY CRYSTALLOGRAPHY (2.2 ANGSTROMS) OF 367-603 IN COMPLEX WITH PHOSPHORYLATED PEPTIDE</scope>
</reference>
<reference key="91">
    <citation type="journal article" date="2007" name="Biochemistry">
        <title>Structure of the catalytic domain of human polo-like kinase 1.</title>
        <authorList>
            <person name="Kothe M."/>
            <person name="Kohls D."/>
            <person name="Low S."/>
            <person name="Coli R."/>
            <person name="Cheng A.C."/>
            <person name="Jacques S.L."/>
            <person name="Johnson T.L."/>
            <person name="Lewis C."/>
            <person name="Loh C."/>
            <person name="Nonomiya J."/>
            <person name="Sheils A.L."/>
            <person name="Verdries K.A."/>
            <person name="Wynn T.A."/>
            <person name="Kuhn C."/>
            <person name="Ding Y.H."/>
        </authorList>
    </citation>
    <scope>X-RAY CRYSTALLOGRAPHY (2.4 ANGSTROMS) OF 13-345 OF MUTANT VAL-210 IN COMPLEXES WITH ATP ANALOGS</scope>
    <scope>MUTAGENESIS OF THR-210</scope>
</reference>
<reference key="92">
    <citation type="journal article" date="2007" name="Chem. Biol. Drug Des.">
        <title>Selectivity-determining residues in Plk1.</title>
        <authorList>
            <person name="Kothe M."/>
            <person name="Kohls D."/>
            <person name="Low S."/>
            <person name="Coli R."/>
            <person name="Rennie G.R."/>
            <person name="Feru F."/>
            <person name="Kuhn C."/>
            <person name="Ding Y.H."/>
        </authorList>
    </citation>
    <scope>X-RAY CRYSTALLOGRAPHY (1.95 ANGSTROMS) OF 37-330 IN COMPLEX WITH SYNTHETIC INHIBITOR BI 2536</scope>
</reference>
<reference key="93">
    <citation type="journal article" date="2007" name="Proc. Natl. Acad. Sci. U.S.A.">
        <title>Molecular and structural basis of polo-like kinase 1 substrate recognition: Implications in centrosomal localization.</title>
        <authorList>
            <person name="Garcia-Alvarez B."/>
            <person name="de Carcer G."/>
            <person name="Ibanez S."/>
            <person name="Bragado-Nilsson E."/>
            <person name="Montoya G."/>
        </authorList>
    </citation>
    <scope>X-RAY CRYSTALLOGRAPHY (1.95 ANGSTROMS) OF 365-603 IN COMPLEX WITH CDC25C</scope>
    <scope>SUBCELLULAR LOCATION</scope>
    <scope>INTERACTION WITH CDC25C</scope>
    <scope>ACTIVITY REGULATION</scope>
    <scope>MUTAGENESIS OF TRP-414</scope>
</reference>
<reference key="94">
    <citation type="journal article" date="2008" name="Acta Crystallogr. D">
        <title>Structure of wild-type Plk-1 kinase domain in complex with a selective DARPin.</title>
        <authorList>
            <person name="Bandeiras T.M."/>
            <person name="Hillig R.C."/>
            <person name="Matias P.M."/>
            <person name="Eberspaecher U."/>
            <person name="Fanghanel J."/>
            <person name="Thomaz M."/>
            <person name="Miranda S."/>
            <person name="Crusius K."/>
            <person name="Putter V."/>
            <person name="Amstutz P."/>
            <person name="Gulotti-Georgieva M."/>
            <person name="Binz H.K."/>
            <person name="Holz C."/>
            <person name="Schmitz A.A."/>
            <person name="Lang C."/>
            <person name="Donner P."/>
            <person name="Egner U."/>
            <person name="Carrondo M.A."/>
            <person name="Muller-Tiemann B."/>
        </authorList>
    </citation>
    <scope>X-RAY CRYSTALLOGRAPHY (2.3 ANGSTROMS) OF 33-345 IN COMPLEX WITH A DARPIN</scope>
</reference>
<reference key="95">
    <citation type="journal article" date="2009" name="Nat. Struct. Mol. Biol.">
        <title>Structural and functional analyses of minimal phosphopeptides targeting the polo-box domain of polo-like kinase 1.</title>
        <authorList>
            <person name="Yun S.M."/>
            <person name="Moulaei T."/>
            <person name="Lim D."/>
            <person name="Bang J.K."/>
            <person name="Park J.E."/>
            <person name="Shenoy S.R."/>
            <person name="Liu F."/>
            <person name="Kang Y.H."/>
            <person name="Liao C."/>
            <person name="Soung N.K."/>
            <person name="Lee S."/>
            <person name="Yoon D.Y."/>
            <person name="Lim Y."/>
            <person name="Lee D.H."/>
            <person name="Otaka A."/>
            <person name="Appella E."/>
            <person name="McMahon J.B."/>
            <person name="Nicklaus M.C."/>
            <person name="Burke T.R. Jr."/>
            <person name="Yaffe M.B."/>
            <person name="Wlodawer A."/>
            <person name="Lee K.S."/>
        </authorList>
    </citation>
    <scope>X-RAY CRYSTALLOGRAPHY (1.58 ANGSTROMS) OF 371-603 IN COMPLEX WITH PHOSPHOPEPTIDE</scope>
    <scope>FUNCTION</scope>
    <scope>SUBCELLULAR LOCATION</scope>
    <scope>INTERACTION WITH PHOSPHORYLATED CENPU</scope>
</reference>
<reference key="96">
    <citation type="journal article" date="2007" name="Nature">
        <title>Patterns of somatic mutation in human cancer genomes.</title>
        <authorList>
            <person name="Greenman C."/>
            <person name="Stephens P."/>
            <person name="Smith R."/>
            <person name="Dalgliesh G.L."/>
            <person name="Hunter C."/>
            <person name="Bignell G."/>
            <person name="Davies H."/>
            <person name="Teague J."/>
            <person name="Butler A."/>
            <person name="Stevens C."/>
            <person name="Edkins S."/>
            <person name="O'Meara S."/>
            <person name="Vastrik I."/>
            <person name="Schmidt E.E."/>
            <person name="Avis T."/>
            <person name="Barthorpe S."/>
            <person name="Bhamra G."/>
            <person name="Buck G."/>
            <person name="Choudhury B."/>
            <person name="Clements J."/>
            <person name="Cole J."/>
            <person name="Dicks E."/>
            <person name="Forbes S."/>
            <person name="Gray K."/>
            <person name="Halliday K."/>
            <person name="Harrison R."/>
            <person name="Hills K."/>
            <person name="Hinton J."/>
            <person name="Jenkinson A."/>
            <person name="Jones D."/>
            <person name="Menzies A."/>
            <person name="Mironenko T."/>
            <person name="Perry J."/>
            <person name="Raine K."/>
            <person name="Richardson D."/>
            <person name="Shepherd R."/>
            <person name="Small A."/>
            <person name="Tofts C."/>
            <person name="Varian J."/>
            <person name="Webb T."/>
            <person name="West S."/>
            <person name="Widaa S."/>
            <person name="Yates A."/>
            <person name="Cahill D.P."/>
            <person name="Louis D.N."/>
            <person name="Goldstraw P."/>
            <person name="Nicholson A.G."/>
            <person name="Brasseur F."/>
            <person name="Looijenga L."/>
            <person name="Weber B.L."/>
            <person name="Chiew Y.-E."/>
            <person name="DeFazio A."/>
            <person name="Greaves M.F."/>
            <person name="Green A.R."/>
            <person name="Campbell P."/>
            <person name="Birney E."/>
            <person name="Easton D.F."/>
            <person name="Chenevix-Trench G."/>
            <person name="Tan M.-H."/>
            <person name="Khoo S.K."/>
            <person name="Teh B.T."/>
            <person name="Yuen S.T."/>
            <person name="Leung S.Y."/>
            <person name="Wooster R."/>
            <person name="Futreal P.A."/>
            <person name="Stratton M.R."/>
        </authorList>
    </citation>
    <scope>VARIANTS [LARGE SCALE ANALYSIS] LEU-12; PHE-261; VAL-332; HIS-463 AND HIS-518</scope>
</reference>
<sequence length="603" mass="68255">MSAAVTAGKLARAPADPGKAGVPGVAAPGAPAAAPPAKEIPEVLVDPRSRRRYVRGRFLGKGGFAKCFEISDADTKEVFAGKIVPKSLLLKPHQREKMSMEISIHRSLAHQHVVGFHGFFEDNDFVFVVLELCRRRSLLELHKRRKALTEPEARYYLRQIVLGCQYLHRNRVIHRDLKLGNLFLNEDLEVKIGDFGLATKVEYDGERKKTLCGTPNYIAPEVLSKKGHSFEVDVWSIGCIMYTLLVGKPPFETSCLKETYLRIKKNEYSIPKHINPVAASLIQKMLQTDPTARPTINELLNDEFFTSGYIPARLPITCLTIPPRFSIAPSSLDPSNRKPLTVLNKGLENPLPERPREKEEPVVRETGEVVDCHLSDMLQQLHSVNASKPSERGLVRQEEAEDPACIPIFWVSKWVDYSDKYGLGYQLCDNSVGVLFNDSTRLILYNDGDSLQYIERDGTESYLTVSSHPNSLMKKITLLKYFRNYMSEHLLKAGANITPREGDELARLPYLRTWFRTRSAIILHLSNGSVQINFFQDHTKLILCPLMAAVTYIDEKRDFRTYRLSLLEEYGCCKELASRLRYARTMVDKLLSSRSASNRLKAS</sequence>
<protein>
    <recommendedName>
        <fullName>Serine/threonine-protein kinase PLK1</fullName>
        <ecNumber evidence="7 8 61 74 79 80">2.7.11.21</ecNumber>
    </recommendedName>
    <alternativeName>
        <fullName>Polo-like kinase 1</fullName>
        <shortName>PLK-1</shortName>
    </alternativeName>
    <alternativeName>
        <fullName>Serine/threonine-protein kinase 13</fullName>
        <shortName>STPK13</shortName>
    </alternativeName>
</protein>
<evidence type="ECO:0000250" key="1"/>
<evidence type="ECO:0000250" key="2">
    <source>
        <dbReference type="UniProtKB" id="P70032"/>
    </source>
</evidence>
<evidence type="ECO:0000250" key="3">
    <source>
        <dbReference type="UniProtKB" id="Q5F2C3"/>
    </source>
</evidence>
<evidence type="ECO:0000255" key="4">
    <source>
        <dbReference type="PROSITE-ProRule" id="PRU00154"/>
    </source>
</evidence>
<evidence type="ECO:0000255" key="5">
    <source>
        <dbReference type="PROSITE-ProRule" id="PRU00159"/>
    </source>
</evidence>
<evidence type="ECO:0000256" key="6">
    <source>
        <dbReference type="SAM" id="MobiDB-lite"/>
    </source>
</evidence>
<evidence type="ECO:0000269" key="7">
    <source>
    </source>
</evidence>
<evidence type="ECO:0000269" key="8">
    <source>
    </source>
</evidence>
<evidence type="ECO:0000269" key="9">
    <source>
    </source>
</evidence>
<evidence type="ECO:0000269" key="10">
    <source>
    </source>
</evidence>
<evidence type="ECO:0000269" key="11">
    <source>
    </source>
</evidence>
<evidence type="ECO:0000269" key="12">
    <source>
    </source>
</evidence>
<evidence type="ECO:0000269" key="13">
    <source>
    </source>
</evidence>
<evidence type="ECO:0000269" key="14">
    <source>
    </source>
</evidence>
<evidence type="ECO:0000269" key="15">
    <source>
    </source>
</evidence>
<evidence type="ECO:0000269" key="16">
    <source>
    </source>
</evidence>
<evidence type="ECO:0000269" key="17">
    <source>
    </source>
</evidence>
<evidence type="ECO:0000269" key="18">
    <source>
    </source>
</evidence>
<evidence type="ECO:0000269" key="19">
    <source>
    </source>
</evidence>
<evidence type="ECO:0000269" key="20">
    <source>
    </source>
</evidence>
<evidence type="ECO:0000269" key="21">
    <source>
    </source>
</evidence>
<evidence type="ECO:0000269" key="22">
    <source>
    </source>
</evidence>
<evidence type="ECO:0000269" key="23">
    <source>
    </source>
</evidence>
<evidence type="ECO:0000269" key="24">
    <source>
    </source>
</evidence>
<evidence type="ECO:0000269" key="25">
    <source>
    </source>
</evidence>
<evidence type="ECO:0000269" key="26">
    <source>
    </source>
</evidence>
<evidence type="ECO:0000269" key="27">
    <source>
    </source>
</evidence>
<evidence type="ECO:0000269" key="28">
    <source>
    </source>
</evidence>
<evidence type="ECO:0000269" key="29">
    <source>
    </source>
</evidence>
<evidence type="ECO:0000269" key="30">
    <source>
    </source>
</evidence>
<evidence type="ECO:0000269" key="31">
    <source>
    </source>
</evidence>
<evidence type="ECO:0000269" key="32">
    <source>
    </source>
</evidence>
<evidence type="ECO:0000269" key="33">
    <source>
    </source>
</evidence>
<evidence type="ECO:0000269" key="34">
    <source>
    </source>
</evidence>
<evidence type="ECO:0000269" key="35">
    <source>
    </source>
</evidence>
<evidence type="ECO:0000269" key="36">
    <source>
    </source>
</evidence>
<evidence type="ECO:0000269" key="37">
    <source>
    </source>
</evidence>
<evidence type="ECO:0000269" key="38">
    <source>
    </source>
</evidence>
<evidence type="ECO:0000269" key="39">
    <source>
    </source>
</evidence>
<evidence type="ECO:0000269" key="40">
    <source>
    </source>
</evidence>
<evidence type="ECO:0000269" key="41">
    <source>
    </source>
</evidence>
<evidence type="ECO:0000269" key="42">
    <source>
    </source>
</evidence>
<evidence type="ECO:0000269" key="43">
    <source>
    </source>
</evidence>
<evidence type="ECO:0000269" key="44">
    <source>
    </source>
</evidence>
<evidence type="ECO:0000269" key="45">
    <source>
    </source>
</evidence>
<evidence type="ECO:0000269" key="46">
    <source>
    </source>
</evidence>
<evidence type="ECO:0000269" key="47">
    <source>
    </source>
</evidence>
<evidence type="ECO:0000269" key="48">
    <source>
    </source>
</evidence>
<evidence type="ECO:0000269" key="49">
    <source>
    </source>
</evidence>
<evidence type="ECO:0000269" key="50">
    <source>
    </source>
</evidence>
<evidence type="ECO:0000269" key="51">
    <source>
    </source>
</evidence>
<evidence type="ECO:0000269" key="52">
    <source>
    </source>
</evidence>
<evidence type="ECO:0000269" key="53">
    <source>
    </source>
</evidence>
<evidence type="ECO:0000269" key="54">
    <source>
    </source>
</evidence>
<evidence type="ECO:0000269" key="55">
    <source>
    </source>
</evidence>
<evidence type="ECO:0000269" key="56">
    <source>
    </source>
</evidence>
<evidence type="ECO:0000269" key="57">
    <source>
    </source>
</evidence>
<evidence type="ECO:0000269" key="58">
    <source>
    </source>
</evidence>
<evidence type="ECO:0000269" key="59">
    <source>
    </source>
</evidence>
<evidence type="ECO:0000269" key="60">
    <source>
    </source>
</evidence>
<evidence type="ECO:0000269" key="61">
    <source>
    </source>
</evidence>
<evidence type="ECO:0000269" key="62">
    <source>
    </source>
</evidence>
<evidence type="ECO:0000269" key="63">
    <source>
    </source>
</evidence>
<evidence type="ECO:0000269" key="64">
    <source>
    </source>
</evidence>
<evidence type="ECO:0000269" key="65">
    <source>
    </source>
</evidence>
<evidence type="ECO:0000269" key="66">
    <source>
    </source>
</evidence>
<evidence type="ECO:0000269" key="67">
    <source>
    </source>
</evidence>
<evidence type="ECO:0000269" key="68">
    <source>
    </source>
</evidence>
<evidence type="ECO:0000269" key="69">
    <source>
    </source>
</evidence>
<evidence type="ECO:0000269" key="70">
    <source>
    </source>
</evidence>
<evidence type="ECO:0000269" key="71">
    <source>
    </source>
</evidence>
<evidence type="ECO:0000269" key="72">
    <source>
    </source>
</evidence>
<evidence type="ECO:0000269" key="73">
    <source>
    </source>
</evidence>
<evidence type="ECO:0000269" key="74">
    <source>
    </source>
</evidence>
<evidence type="ECO:0000269" key="75">
    <source>
    </source>
</evidence>
<evidence type="ECO:0000269" key="76">
    <source>
    </source>
</evidence>
<evidence type="ECO:0000269" key="77">
    <source>
    </source>
</evidence>
<evidence type="ECO:0000269" key="78">
    <source>
    </source>
</evidence>
<evidence type="ECO:0000269" key="79">
    <source>
    </source>
</evidence>
<evidence type="ECO:0000269" key="80">
    <source>
    </source>
</evidence>
<evidence type="ECO:0000269" key="81">
    <source>
    </source>
</evidence>
<evidence type="ECO:0000305" key="82"/>
<evidence type="ECO:0000305" key="83">
    <source>
    </source>
</evidence>
<evidence type="ECO:0007744" key="84">
    <source>
    </source>
</evidence>
<evidence type="ECO:0007744" key="85">
    <source>
    </source>
</evidence>
<evidence type="ECO:0007744" key="86">
    <source>
    </source>
</evidence>
<evidence type="ECO:0007744" key="87">
    <source>
    </source>
</evidence>
<evidence type="ECO:0007744" key="88">
    <source>
    </source>
</evidence>
<evidence type="ECO:0007744" key="89">
    <source>
    </source>
</evidence>
<evidence type="ECO:0007744" key="90">
    <source>
    </source>
</evidence>
<evidence type="ECO:0007829" key="91">
    <source>
        <dbReference type="PDB" id="2RKU"/>
    </source>
</evidence>
<evidence type="ECO:0007829" key="92">
    <source>
        <dbReference type="PDB" id="2V5Q"/>
    </source>
</evidence>
<evidence type="ECO:0007829" key="93">
    <source>
        <dbReference type="PDB" id="3P34"/>
    </source>
</evidence>
<evidence type="ECO:0007829" key="94">
    <source>
        <dbReference type="PDB" id="3Q1I"/>
    </source>
</evidence>
<evidence type="ECO:0007829" key="95">
    <source>
        <dbReference type="PDB" id="4O56"/>
    </source>
</evidence>
<evidence type="ECO:0007829" key="96">
    <source>
        <dbReference type="PDB" id="4WHL"/>
    </source>
</evidence>
<evidence type="ECO:0007829" key="97">
    <source>
        <dbReference type="PDB" id="4X9R"/>
    </source>
</evidence>
<evidence type="ECO:0007829" key="98">
    <source>
        <dbReference type="PDB" id="5J19"/>
    </source>
</evidence>
<accession>P53350</accession>
<accession>Q15153</accession>
<accession>Q99746</accession>
<comment type="function">
    <text evidence="2 3 7 8 10 11 13 14 15 16 18 19 20 21 23 24 25 28 29 30 34 35 38 40 42 43 44 45 46 47 48 50 51 52 53 54 55 57 58 60 61 62 65 66 69 71 72 73 79 80 81">Serine/threonine-protein kinase that performs several important functions throughout M phase of the cell cycle, including the regulation of centrosome maturation and spindle assembly, the removal of cohesins from chromosome arms, the inactivation of anaphase-promoting complex/cyclosome (APC/C) inhibitors, and the regulation of mitotic exit and cytokinesis (PubMed:11202906, PubMed:12207013, PubMed:12447691, PubMed:12524548, PubMed:12738781, PubMed:12852856, PubMed:12939256, PubMed:14532005, PubMed:14734534, PubMed:15070733, PubMed:15148369, PubMed:15469984, PubMed:16198290, PubMed:16247472, PubMed:16980960, PubMed:17081991, PubMed:17351640, PubMed:17376779, PubMed:17617734, PubMed:18174154, PubMed:18331714, PubMed:18418051, PubMed:18477460, PubMed:18521620, PubMed:18615013, PubMed:19160488, PubMed:19351716, PubMed:19468300, PubMed:19468302, PubMed:19473992, PubMed:19509060, PubMed:19597481, PubMed:23455478, PubMed:23509069, PubMed:28512243, PubMed:8991084). Polo-like kinase proteins act by binding and phosphorylating proteins that are already phosphorylated on a specific motif recognized by the POLO box domains (PubMed:11202906, PubMed:12207013, PubMed:12447691, PubMed:12524548, PubMed:12738781, PubMed:12852856, PubMed:12939256, PubMed:14532005, PubMed:14734534, PubMed:15070733, PubMed:15148369, PubMed:15469984, PubMed:16198290, PubMed:16247472, PubMed:16980960, PubMed:17081991, PubMed:17351640, PubMed:17376779, PubMed:17617734, PubMed:18174154, PubMed:18331714, PubMed:18418051, PubMed:18477460, PubMed:18521620, PubMed:18615013, PubMed:19160488, PubMed:19351716, PubMed:19468300, PubMed:19468302, PubMed:19473992, PubMed:19509060, PubMed:19597481, PubMed:23455478, PubMed:23509069, PubMed:28512243, PubMed:8991084). Phosphorylates BORA, BUB1B/BUBR1, CCNB1, CDC25C, CEP55, ECT2, ERCC6L, FBXO5/EMI1, FOXM1, KIF20A/MKLP2, CENPU, NEDD1, NINL, NPM1, NUDC, PKMYT1/MYT1, KIZ, MRE11, PPP1R12A/MYPT1, POLQ, PRC1, RACGAP1/CYK4, RAD51, RHNO1, SGO1, STAG2/SA2, TEX14, TOPORS, p73/TP73, TPT1, WEE1 and HNRNPU (PubMed:11202906, PubMed:12207013, PubMed:12447691, PubMed:12524548, PubMed:12738781, PubMed:12852856, PubMed:12939256, PubMed:14532005, PubMed:14734534, PubMed:15070733, PubMed:15148369, PubMed:15469984, PubMed:16198290, PubMed:16247472, PubMed:16980960, PubMed:17081991, PubMed:17218258, PubMed:17351640, PubMed:17376779, PubMed:17617734, PubMed:18174154, PubMed:18331714, PubMed:18418051, PubMed:18477460, PubMed:18521620, PubMed:18615013, PubMed:19160488, PubMed:19351716, PubMed:19468300, PubMed:19468302, PubMed:19473992, PubMed:19509060, PubMed:19597481, PubMed:22325354, PubMed:23455478, PubMed:23509069, PubMed:25986610, PubMed:26811421, PubMed:28512243, PubMed:37440612, PubMed:37674080, PubMed:8991084). Plays a key role in centrosome functions and the assembly of bipolar spindles by phosphorylating KIZ, NEDD1 and NINL (PubMed:16980960, PubMed:19509060). NEDD1 phosphorylation promotes subsequent targeting of the gamma-tubulin ring complex (gTuRC) to the centrosome, an important step for spindle formation (PubMed:19509060). Phosphorylation of NINL component of the centrosome leads to NINL dissociation from other centrosomal proteins (PubMed:12852856). Involved in mitosis exit and cytokinesis by phosphorylating CEP55, ECT2, KIF20A/MKLP2, CENPU, PRC1 and RACGAP1 (PubMed:12939256, PubMed:16247472, PubMed:17351640, PubMed:19468300, PubMed:19468302). Recruited at the central spindle by phosphorylating and docking PRC1 and KIF20A/MKLP2; creates its own docking sites on PRC1 and KIF20A/MKLP2 by mediating phosphorylation of sites subsequently recognized by the POLO box domains (PubMed:12939256, PubMed:17351640). Phosphorylates RACGAP1, thereby creating a docking site for the Rho GTP exchange factor ECT2 that is essential for the cleavage furrow formation (PubMed:19468300, PubMed:19468302). Promotes the central spindle recruitment of ECT2 (PubMed:16247472). Plays a central role in G2/M transition of mitotic cell cycle by phosphorylating CCNB1, CDC25C, FOXM1, CENPU, PKMYT1/MYT1, PPP1R12A/MYPT1 and WEE1 (PubMed:11202906, PubMed:12447691, PubMed:12524548, PubMed:19160488). Part of a regulatory circuit that promotes the activation of CDK1 by phosphorylating the positive regulator CDC25C and inhibiting the negative regulators WEE1 and PKMYT1/MYT1 (PubMed:11202906). Also acts by mediating phosphorylation of cyclin-B1 (CCNB1) on centrosomes in prophase (PubMed:12447691, PubMed:12524548). Phosphorylates FOXM1, a key mitotic transcription regulator, leading to enhance FOXM1 transcriptional activity (PubMed:19160488). Involved in kinetochore functions and sister chromatid cohesion by phosphorylating BUB1B/BUBR1, FBXO5/EMI1 and STAG2/SA2 (PubMed:15148369, PubMed:15469984, PubMed:17376779, PubMed:18331714). PLK1 is high on non-attached kinetochores suggesting a role of PLK1 in kinetochore attachment or in spindle assembly checkpoint (SAC) regulation (PubMed:17617734). Required for kinetochore localization of BUB1B (PubMed:17376779). Regulates the dissociation of cohesin from chromosomes by phosphorylating cohesin subunits such as STAG2/SA2 (By similarity). Phosphorylates SGO1: required for spindle pole localization of isoform 3 of SGO1 and plays a role in regulating its centriole cohesion function (PubMed:18331714). Mediates phosphorylation of FBXO5/EMI1, a negative regulator of the APC/C complex during prophase, leading to FBXO5/EMI1 ubiquitination and degradation by the proteasome (PubMed:15148369, PubMed:15469984). Acts as a negative regulator of p53 family members: phosphorylates TOPORS, leading to inhibit the sumoylation of p53/TP53 and simultaneously enhance the ubiquitination and subsequent degradation of p53/TP53 (PubMed:19473992). Phosphorylates the transactivation domain of the transcription factor p73/TP73, leading to inhibit p73/TP73-mediated transcriptional activation and pro-apoptotic functions. Phosphorylates BORA, and thereby promotes the degradation of BORA (PubMed:18521620). Contributes to the regulation of AURKA function (PubMed:18615013, PubMed:18662541). Also required for recovery after DNA damage checkpoint and entry into mitosis (PubMed:18615013, PubMed:18662541). Phosphorylates MISP, leading to stabilization of cortical and astral microtubule attachments required for proper spindle positioning (PubMed:23509069). Together with MEIKIN, acts as a regulator of kinetochore function during meiosis I: required both for mono-orientation of kinetochores on sister chromosomes and protection of centromeric cohesin from separase-mediated cleavage (By similarity). Phosphorylates CEP68 and is required for its degradation (PubMed:25503564). Regulates nuclear envelope breakdown during prophase by phosphorylating DCTN1 resulting in its localization in the nuclear envelope (PubMed:20679239). Phosphorylates the heat shock transcription factor HSF1, promoting HSF1 nuclear translocation upon heat shock (PubMed:15661742). Phosphorylates HSF1 also in the early mitotic period; this phosphorylation regulates HSF1 localization to the spindle pole, the recruitment of the SCF(BTRC) ubiquitin ligase complex induicing HSF1 degradation, and hence mitotic progression (PubMed:18794143). Regulates mitotic progression by phosphorylating RIOK2 (PubMed:21880710). Through the phosphorylation of DZIP1 regulates the localization during mitosis of the BBSome, a ciliary protein complex involved in cilium biogenesis (PubMed:27979967). Regulates DNA repair during mitosis by mediating phosphorylation of POLQ and RHNO1, thereby promoting POLQ recruitment to DNA damage sites (PubMed:37440612, PubMed:37674080). Phosphorylates ATXN10 which may play a role in the regulation of cytokinesis and may stimulate the proteasome-mediated degradation of ATXN10 (PubMed:21857149).</text>
</comment>
<comment type="catalytic activity">
    <reaction evidence="7 8 61 62 74 79 80">
        <text>L-seryl-[protein] + ATP = O-phospho-L-seryl-[protein] + ADP + H(+)</text>
        <dbReference type="Rhea" id="RHEA:17989"/>
        <dbReference type="Rhea" id="RHEA-COMP:9863"/>
        <dbReference type="Rhea" id="RHEA-COMP:11604"/>
        <dbReference type="ChEBI" id="CHEBI:15378"/>
        <dbReference type="ChEBI" id="CHEBI:29999"/>
        <dbReference type="ChEBI" id="CHEBI:30616"/>
        <dbReference type="ChEBI" id="CHEBI:83421"/>
        <dbReference type="ChEBI" id="CHEBI:456216"/>
        <dbReference type="EC" id="2.7.11.21"/>
    </reaction>
</comment>
<comment type="catalytic activity">
    <reaction evidence="7 8 61 80">
        <text>L-threonyl-[protein] + ATP = O-phospho-L-threonyl-[protein] + ADP + H(+)</text>
        <dbReference type="Rhea" id="RHEA:46608"/>
        <dbReference type="Rhea" id="RHEA-COMP:11060"/>
        <dbReference type="Rhea" id="RHEA-COMP:11605"/>
        <dbReference type="ChEBI" id="CHEBI:15378"/>
        <dbReference type="ChEBI" id="CHEBI:30013"/>
        <dbReference type="ChEBI" id="CHEBI:30616"/>
        <dbReference type="ChEBI" id="CHEBI:61977"/>
        <dbReference type="ChEBI" id="CHEBI:456216"/>
        <dbReference type="EC" id="2.7.11.21"/>
    </reaction>
</comment>
<comment type="activity regulation">
    <text evidence="31 39 46">Activated by phosphorylation of Thr-210 by AURKA; phosphorylation by AURKA is enhanced by BORA (PubMed:17307877, PubMed:18615013). Once activated, activity is stimulated by binding target proteins (PubMed:17307877, PubMed:18615013). Binding of target proteins has no effect on the non-activated kinase (PubMed:17307877, PubMed:18615013). Several inhibitors targeting PLKs are currently in development and are under investigation in a growing number of clinical trials, such as BI 2536, an ATP-competitive PLK1 inhibitor or BI 6727, a dihydropteridinone that specifically inhibits the catalytic activity of PLK1 (PubMed:18005335).</text>
</comment>
<comment type="subunit">
    <text evidence="16 22 26 27 31 32 37 41 47 49 51 56 57 58 59 63 64 65 67 68 69 70 75 77 78">Interacts with CEP170 (PubMed:15616186). Interacts with EVI5 (PubMed:16439210). Interacts with FAM29A (PubMed:19029337). Interacts with SLX4/BTBD12 (PubMed:19596235). Interacts with TTDN1 (PubMed:17310276). Interacts (via POLO-box domain) with the phosphorylated form of BUB1, CDC25C and CENPU (PubMed:14532005, PubMed:16760428, PubMed:17307877, PubMed:19597481). Interacts with KIF2A (PubMed:19351716). Interacts with CYLD (PubMed:17495026). Part of an astrin (SPAG5)-kinastrin (SKAP) complex containing KNSTRN, SPAG5, PLK1, DYNLL1 and SGO2 (PubMed:21402792). Interacts with BIRC6/bruce (PubMed:18329369). Interacts with CDK1-phosphorylated FRY; this interaction occurs in mitotic cells, but not in interphase cells (PubMed:22753416). FRY interaction facilitates AURKA-mediated PLK1 phosphorylation (PubMed:22753416). Interacts with CDK1-phosphorylated DCTN6 during mitotic prometaphase; the interaction facilitates recruitment to kinetochores (PubMed:23455152). Interacts with CEP68; the interaction phosphorylates CEP68 (PubMed:25503564). Interacts (via POLO-box domain) with DCTN1 (PubMed:20679239). Interacts with CEP20 in later G1, S, G2 and M phases of the cell cycle; this interaction recruits PLK1 to centrosomes, a step required for S phase progression (PubMed:24018379). Interacts with KLHL22 (PubMed:23455478, PubMed:24067371). Interacts (via POLO box domains) with NEDD9/HEF1 (via C-terminus) (PubMed:29191835). Interacts with FIRRM (via N-terminus region); required for maintaining, but not activating, PLK1 kinase activity (PubMed:34260926). Interacts with FZR1 (PubMed:18662541). Interacts with SKA3; the interaction promotes the stability of PLK1; the interaction promotes the stability of PLK1 (PubMed:32799774). Interacts with the MTMR3:MTMR4 heterooligomer; brings CEP55 and PLK1 together during early mitosis, regulating the phosphorylation of CEP55 by PLK1 and its recruitment to the midbody where it can mediate cell abscission (PubMed:25659891).</text>
</comment>
<comment type="interaction">
    <interactant intactId="EBI-476768">
        <id>P53350</id>
    </interactant>
    <interactant intactId="EBI-77613">
        <id>P05067</id>
        <label>APP</label>
    </interactant>
    <organismsDiffer>false</organismsDiffer>
    <experiments>3</experiments>
</comment>
<comment type="interaction">
    <interactant intactId="EBI-476768">
        <id>P53350</id>
    </interactant>
    <interactant intactId="EBI-448680">
        <id>O14965</id>
        <label>AURKA</label>
    </interactant>
    <organismsDiffer>false</organismsDiffer>
    <experiments>4</experiments>
</comment>
<comment type="interaction">
    <interactant intactId="EBI-476768">
        <id>P53350</id>
    </interactant>
    <interactant intactId="EBI-4400025">
        <id>Q9Y2T1</id>
        <label>AXIN2</label>
    </interactant>
    <organismsDiffer>false</organismsDiffer>
    <experiments>2</experiments>
</comment>
<comment type="interaction">
    <interactant intactId="EBI-476768">
        <id>P53350</id>
    </interactant>
    <interactant intactId="EBI-1765160">
        <id>Q9NR09</id>
        <label>BIRC6</label>
    </interactant>
    <organismsDiffer>false</organismsDiffer>
    <experiments>4</experiments>
</comment>
<comment type="interaction">
    <interactant intactId="EBI-476768">
        <id>P53350</id>
    </interactant>
    <interactant intactId="EBI-621372">
        <id>P54132</id>
        <label>BLM</label>
    </interactant>
    <organismsDiffer>false</organismsDiffer>
    <experiments>4</experiments>
</comment>
<comment type="interaction">
    <interactant intactId="EBI-476768">
        <id>P53350</id>
    </interactant>
    <interactant intactId="EBI-719836">
        <id>Q6PGQ7</id>
        <label>BORA</label>
    </interactant>
    <organismsDiffer>false</organismsDiffer>
    <experiments>9</experiments>
</comment>
<comment type="interaction">
    <interactant intactId="EBI-476768">
        <id>P53350</id>
    </interactant>
    <interactant intactId="EBI-11019939">
        <id>A1L170</id>
        <label>C1orf226</label>
    </interactant>
    <organismsDiffer>false</organismsDiffer>
    <experiments>2</experiments>
</comment>
<comment type="interaction">
    <interactant intactId="EBI-476768">
        <id>P53350</id>
    </interactant>
    <interactant intactId="EBI-78060">
        <id>Q14790</id>
        <label>CASP8</label>
    </interactant>
    <organismsDiffer>false</organismsDiffer>
    <experiments>3</experiments>
</comment>
<comment type="interaction">
    <interactant intactId="EBI-476768">
        <id>P53350</id>
    </interactant>
    <interactant intactId="EBI-974439">
        <id>P30307</id>
        <label>CDC25C</label>
    </interactant>
    <organismsDiffer>false</organismsDiffer>
    <experiments>5</experiments>
</comment>
<comment type="interaction">
    <interactant intactId="EBI-476768">
        <id>P53350</id>
    </interactant>
    <interactant intactId="EBI-374862">
        <id>Q99741</id>
        <label>CDC6</label>
    </interactant>
    <organismsDiffer>false</organismsDiffer>
    <experiments>6</experiments>
</comment>
<comment type="interaction">
    <interactant intactId="EBI-476768">
        <id>P53350</id>
    </interactant>
    <interactant intactId="EBI-15793375">
        <id>Q71F23-1</id>
        <label>CENPU</label>
    </interactant>
    <organismsDiffer>false</organismsDiffer>
    <experiments>5</experiments>
</comment>
<comment type="interaction">
    <interactant intactId="EBI-476768">
        <id>P53350</id>
    </interactant>
    <interactant intactId="EBI-9051024">
        <id>Q76N32</id>
        <label>CEP68</label>
    </interactant>
    <organismsDiffer>false</organismsDiffer>
    <experiments>2</experiments>
</comment>
<comment type="interaction">
    <interactant intactId="EBI-476768">
        <id>P53350</id>
    </interactant>
    <interactant intactId="EBI-1180783">
        <id>O96017</id>
        <label>CHEK2</label>
    </interactant>
    <organismsDiffer>false</organismsDiffer>
    <experiments>7</experiments>
</comment>
<comment type="interaction">
    <interactant intactId="EBI-476768">
        <id>P53350</id>
    </interactant>
    <interactant intactId="EBI-740850">
        <id>O14641</id>
        <label>DVL2</label>
    </interactant>
    <organismsDiffer>false</organismsDiffer>
    <experiments>2</experiments>
</comment>
<comment type="interaction">
    <interactant intactId="EBI-476768">
        <id>P53350</id>
    </interactant>
    <interactant intactId="EBI-970310">
        <id>P23588</id>
        <label>EIF4B</label>
    </interactant>
    <organismsDiffer>false</organismsDiffer>
    <experiments>3</experiments>
</comment>
<comment type="interaction">
    <interactant intactId="EBI-476768">
        <id>P53350</id>
    </interactant>
    <interactant intactId="EBI-1042535">
        <id>Q2NKX8</id>
        <label>ERCC6L</label>
    </interactant>
    <organismsDiffer>false</organismsDiffer>
    <experiments>6</experiments>
</comment>
<comment type="interaction">
    <interactant intactId="EBI-476768">
        <id>P53350</id>
    </interactant>
    <interactant intactId="EBI-852291">
        <id>O60447</id>
        <label>EVI5</label>
    </interactant>
    <organismsDiffer>false</organismsDiffer>
    <experiments>3</experiments>
</comment>
<comment type="interaction">
    <interactant intactId="EBI-476768">
        <id>P53350</id>
    </interactant>
    <interactant intactId="EBI-494804">
        <id>Q13158</id>
        <label>FADD</label>
    </interactant>
    <organismsDiffer>false</organismsDiffer>
    <experiments>9</experiments>
</comment>
<comment type="interaction">
    <interactant intactId="EBI-476768">
        <id>P53350</id>
    </interactant>
    <interactant intactId="EBI-2511327">
        <id>Q9NYZ3</id>
        <label>GTSE1</label>
    </interactant>
    <organismsDiffer>false</organismsDiffer>
    <experiments>6</experiments>
</comment>
<comment type="interaction">
    <interactant intactId="EBI-476768">
        <id>P53350</id>
    </interactant>
    <interactant intactId="EBI-629985">
        <id>P08107</id>
        <label>HSPA1B</label>
    </interactant>
    <organismsDiffer>false</organismsDiffer>
    <experiments>5</experiments>
</comment>
<comment type="interaction">
    <interactant intactId="EBI-476768">
        <id>P53350</id>
    </interactant>
    <interactant intactId="EBI-473199">
        <id>O95251</id>
        <label>KAT7</label>
    </interactant>
    <organismsDiffer>false</organismsDiffer>
    <experiments>6</experiments>
</comment>
<comment type="interaction">
    <interactant intactId="EBI-476768">
        <id>P53350</id>
    </interactant>
    <interactant intactId="EBI-374819">
        <id>P49736</id>
        <label>MCM2</label>
    </interactant>
    <organismsDiffer>false</organismsDiffer>
    <experiments>2</experiments>
</comment>
<comment type="interaction">
    <interactant intactId="EBI-476768">
        <id>P53350</id>
    </interactant>
    <interactant intactId="EBI-355924">
        <id>P33993</id>
        <label>MCM7</label>
    </interactant>
    <organismsDiffer>false</organismsDiffer>
    <experiments>4</experiments>
</comment>
<comment type="interaction">
    <interactant intactId="EBI-476768">
        <id>P53350</id>
    </interactant>
    <interactant intactId="EBI-389668">
        <id>Q00987</id>
        <label>MDM2</label>
    </interactant>
    <organismsDiffer>false</organismsDiffer>
    <experiments>7</experiments>
</comment>
<comment type="interaction">
    <interactant intactId="EBI-476768">
        <id>P53350</id>
    </interactant>
    <interactant intactId="EBI-1044009">
        <id>Q8TD19</id>
        <label>NEK9</label>
    </interactant>
    <organismsDiffer>false</organismsDiffer>
    <experiments>5</experiments>
</comment>
<comment type="interaction">
    <interactant intactId="EBI-476768">
        <id>P53350</id>
    </interactant>
    <interactant intactId="EBI-2859639">
        <id>Q5HYW2</id>
        <label>NHSL2</label>
    </interactant>
    <organismsDiffer>false</organismsDiffer>
    <experiments>3</experiments>
</comment>
<comment type="interaction">
    <interactant intactId="EBI-476768">
        <id>P53350</id>
    </interactant>
    <interactant intactId="EBI-716327">
        <id>O75665</id>
        <label>OFD1</label>
    </interactant>
    <organismsDiffer>false</organismsDiffer>
    <experiments>4</experiments>
</comment>
<comment type="interaction">
    <interactant intactId="EBI-476768">
        <id>P53350</id>
    </interactant>
    <interactant intactId="EBI-713786">
        <id>Q8IXK0</id>
        <label>PHC2</label>
    </interactant>
    <organismsDiffer>false</organismsDiffer>
    <experiments>2</experiments>
</comment>
<comment type="interaction">
    <interactant intactId="EBI-476768">
        <id>P53350</id>
    </interactant>
    <interactant intactId="EBI-476768">
        <id>P53350</id>
        <label>PLK1</label>
    </interactant>
    <organismsDiffer>false</organismsDiffer>
    <experiments>3</experiments>
</comment>
<comment type="interaction">
    <interactant intactId="EBI-476768">
        <id>P53350</id>
    </interactant>
    <interactant intactId="EBI-11047108">
        <id>P49768-2</id>
        <label>PSEN1</label>
    </interactant>
    <organismsDiffer>false</organismsDiffer>
    <experiments>3</experiments>
</comment>
<comment type="interaction">
    <interactant intactId="EBI-476768">
        <id>P53350</id>
    </interactant>
    <interactant intactId="EBI-717233">
        <id>Q9H0H5</id>
        <label>RACGAP1</label>
    </interactant>
    <organismsDiffer>false</organismsDiffer>
    <experiments>4</experiments>
</comment>
<comment type="interaction">
    <interactant intactId="EBI-476768">
        <id>P53350</id>
    </interactant>
    <interactant intactId="EBI-2370740">
        <id>Q8IY92</id>
        <label>SLX4</label>
    </interactant>
    <organismsDiffer>false</organismsDiffer>
    <experiments>8</experiments>
</comment>
<comment type="interaction">
    <interactant intactId="EBI-476768">
        <id>P53350</id>
    </interactant>
    <interactant intactId="EBI-356349">
        <id>Q92844</id>
        <label>TANK</label>
    </interactant>
    <organismsDiffer>false</organismsDiffer>
    <experiments>4</experiments>
</comment>
<comment type="interaction">
    <interactant intactId="EBI-476768">
        <id>P53350</id>
    </interactant>
    <interactant intactId="EBI-714215">
        <id>Q15583</id>
        <label>TGIF1</label>
    </interactant>
    <organismsDiffer>false</organismsDiffer>
    <experiments>3</experiments>
</comment>
<comment type="interaction">
    <interactant intactId="EBI-476768">
        <id>P53350</id>
    </interactant>
    <interactant intactId="EBI-366083">
        <id>P04637</id>
        <label>TP53</label>
    </interactant>
    <organismsDiffer>false</organismsDiffer>
    <experiments>6</experiments>
</comment>
<comment type="interaction">
    <interactant intactId="EBI-476768">
        <id>P53350</id>
    </interactant>
    <interactant intactId="EBI-396540">
        <id>Q12888</id>
        <label>TP53BP1</label>
    </interactant>
    <organismsDiffer>false</organismsDiffer>
    <experiments>6</experiments>
</comment>
<comment type="interaction">
    <interactant intactId="EBI-476768">
        <id>P53350</id>
    </interactant>
    <interactant intactId="EBI-914695">
        <id>P30291</id>
        <label>WEE1</label>
    </interactant>
    <organismsDiffer>false</organismsDiffer>
    <experiments>2</experiments>
</comment>
<comment type="interaction">
    <interactant intactId="EBI-476768">
        <id>P53350</id>
    </interactant>
    <interactant intactId="EBI-356498">
        <id>P62258</id>
        <label>YWHAE</label>
    </interactant>
    <organismsDiffer>false</organismsDiffer>
    <experiments>2</experiments>
</comment>
<comment type="interaction">
    <interactant intactId="EBI-476768">
        <id>P53350</id>
    </interactant>
    <interactant intactId="EBI-641940">
        <id>Q60838</id>
        <label>Dvl2</label>
    </interactant>
    <organismsDiffer>true</organismsDiffer>
    <experiments>12</experiments>
</comment>
<comment type="interaction">
    <interactant intactId="EBI-476768">
        <id>P53350</id>
    </interactant>
    <interactant intactId="EBI-641788">
        <id>P23804</id>
        <label>Mdm2</label>
    </interactant>
    <organismsDiffer>true</organismsDiffer>
    <experiments>2</experiments>
</comment>
<comment type="interaction">
    <interactant intactId="EBI-476768">
        <id>P53350</id>
    </interactant>
    <interactant intactId="EBI-15790796">
        <id>P70399-1</id>
        <label>Tp53bp1</label>
    </interactant>
    <organismsDiffer>true</organismsDiffer>
    <experiments>2</experiments>
</comment>
<comment type="interaction">
    <interactant intactId="EBI-476768">
        <id>P53350</id>
    </interactant>
    <interactant intactId="EBI-6927873">
        <id>PRO_0000045602</id>
        <dbReference type="UniProtKB" id="Q99IB8"/>
    </interactant>
    <organismsDiffer>true</organismsDiffer>
    <experiments>4</experiments>
</comment>
<comment type="subcellular location">
    <subcellularLocation>
        <location>Nucleus</location>
    </subcellularLocation>
    <subcellularLocation>
        <location>Chromosome</location>
        <location>Centromere</location>
        <location>Kinetochore</location>
    </subcellularLocation>
    <subcellularLocation>
        <location evidence="17 67">Cytoplasm</location>
        <location evidence="17 67">Cytoskeleton</location>
        <location evidence="17 67">Microtubule organizing center</location>
        <location evidence="17 67">Centrosome</location>
    </subcellularLocation>
    <subcellularLocation>
        <location evidence="48 76">Cytoplasm</location>
        <location evidence="48 76">Cytoskeleton</location>
        <location evidence="48 76">Spindle</location>
    </subcellularLocation>
    <subcellularLocation>
        <location evidence="76">Midbody</location>
    </subcellularLocation>
    <text evidence="48 67">localization at the centrosome starts at the G1/S transition (PubMed:24018379). During early stages of mitosis, the phosphorylated form is detected on centrosomes and kinetochores. Localizes to the outer kinetochore. Presence of SGO1 and interaction with the phosphorylated form of BUB1 is required for the kinetochore localization. Localizes onto the central spindle by phosphorylating and docking at midzone proteins KIF20A/MKLP2 and PRC1. Colocalizes with FRY to separating centrosomes and spindle poles from prophase to metaphase in mitosis, but not in other stages of the cell cycle. Localization to the centrosome is required for S phase progression (PubMed:24018379). Colocalizes with HSF1 at the spindle poles during prometaphase (PubMed:18794143).</text>
</comment>
<comment type="tissue specificity">
    <text>Placenta and colon.</text>
</comment>
<comment type="developmental stage">
    <text>Accumulates to a maximum during the G2 and M phases, declines to a nearly undetectable level following mitosis and throughout G1 phase, and then begins to accumulate again during S phase.</text>
</comment>
<comment type="induction">
    <text>By growth-stimulating agents.</text>
</comment>
<comment type="domain">
    <text evidence="15 16 18 34">The POLO box domains act as phosphopeptide-binding module that recognizes and binds serine-[phosphothreonine/phosphoserine]-(proline/X) motifs. PLK1 recognizes and binds docking proteins that are already phosphorylated on these motifs, and then phosphorylates them. PLK1 can also create its own docking sites by mediating phosphorylation of serine-[phosphothreonine/phosphoserine]-(proline/X) motifs subsequently recognized by the POLO box domains.</text>
</comment>
<comment type="PTM">
    <text evidence="8 9 12 44 46">Catalytic activity is enhanced by phosphorylation of Thr-210. Phosphorylation at Thr-210 is first detected on centrosomes in the G2 phase of the cell cycle, peaks in prometaphase and gradually disappears from centrosomes during anaphase. Dephosphorylation at Thr-210 at centrosomes is probably mediated by protein phosphatase 1C (PP1C), via interaction with PPP1R12A/MYPT1. Autophosphorylation and phosphorylation of Ser-137 may not be significant for the activation of PLK1 during mitosis, but may enhance catalytic activity during recovery after DNA damage checkpoint. Phosphorylated in vitro by STK10.</text>
</comment>
<comment type="PTM">
    <text evidence="47 65">Ubiquitinated by the anaphase promoting complex/cyclosome (APC/C) in anaphase and following DNA damage, leading to its degradation by the proteasome. Ubiquitination is mediated via its interaction with FZR1/CDH1. Ubiquitination and subsequent degradation prevents entry into mitosis and is essential to maintain an efficient G2 DNA damage checkpoint. Monoubiquitination at Lys-492 by the BCR(KLHL22) ubiquitin ligase complex does not lead to degradation: it promotes PLK1 dissociation from phosphoreceptor proteins and subsequent removal from kinetochores, allowing silencing of the spindle assembly checkpoint (SAC) and chromosome segregation.</text>
</comment>
<comment type="disease">
    <text>Defects in PLK1 are associated with some cancers, such as gastric, thyroid or B-cell lymphomas. Expression is cancer increased in tumor tissues with a poor prognosis, suggesting a role in malignant transformations and carcinogenesis.</text>
</comment>
<comment type="similarity">
    <text evidence="5">Belongs to the protein kinase superfamily. Ser/Thr protein kinase family. CDC5/Polo subfamily.</text>
</comment>
<comment type="online information" name="Atlas of Genetics and Cytogenetics in Oncology and Haematology">
    <link uri="https://atlasgeneticsoncology.org/gene/41747/PLK1"/>
</comment>
<name>PLK1_HUMAN</name>
<feature type="initiator methionine" description="Removed" evidence="88">
    <location>
        <position position="1"/>
    </location>
</feature>
<feature type="chain" id="PRO_0000086556" description="Serine/threonine-protein kinase PLK1">
    <location>
        <begin position="2"/>
        <end position="603"/>
    </location>
</feature>
<feature type="domain" description="Protein kinase" evidence="5">
    <location>
        <begin position="53"/>
        <end position="305"/>
    </location>
</feature>
<feature type="domain" description="POLO box 1" evidence="4">
    <location>
        <begin position="410"/>
        <end position="488"/>
    </location>
</feature>
<feature type="domain" description="POLO box 2" evidence="4">
    <location>
        <begin position="510"/>
        <end position="592"/>
    </location>
</feature>
<feature type="region of interest" description="Disordered" evidence="6">
    <location>
        <begin position="1"/>
        <end position="35"/>
    </location>
</feature>
<feature type="region of interest" description="Activation loop">
    <location>
        <begin position="194"/>
        <end position="221"/>
    </location>
</feature>
<feature type="region of interest" description="Disordered" evidence="6">
    <location>
        <begin position="338"/>
        <end position="364"/>
    </location>
</feature>
<feature type="region of interest" description="Linker">
    <location>
        <begin position="493"/>
        <end position="507"/>
    </location>
</feature>
<feature type="region of interest" description="Important for interaction with phosphorylated proteins" evidence="1">
    <location>
        <begin position="538"/>
        <end position="540"/>
    </location>
</feature>
<feature type="short sequence motif" description="D-box that targets the protein for proteasomal degradation in anaphase">
    <location>
        <begin position="337"/>
        <end position="340"/>
    </location>
</feature>
<feature type="compositionally biased region" description="Low complexity" evidence="6">
    <location>
        <begin position="13"/>
        <end position="35"/>
    </location>
</feature>
<feature type="compositionally biased region" description="Basic and acidic residues" evidence="6">
    <location>
        <begin position="351"/>
        <end position="364"/>
    </location>
</feature>
<feature type="active site" description="Proton acceptor" evidence="46">
    <location>
        <position position="176"/>
    </location>
</feature>
<feature type="binding site">
    <location>
        <begin position="59"/>
        <end position="67"/>
    </location>
    <ligand>
        <name>ATP</name>
        <dbReference type="ChEBI" id="CHEBI:30616"/>
    </ligand>
</feature>
<feature type="binding site">
    <location>
        <position position="82"/>
    </location>
    <ligand>
        <name>ATP</name>
        <dbReference type="ChEBI" id="CHEBI:30616"/>
    </ligand>
</feature>
<feature type="binding site">
    <location>
        <position position="131"/>
    </location>
    <ligand>
        <name>ATP</name>
        <dbReference type="ChEBI" id="CHEBI:30616"/>
    </ligand>
</feature>
<feature type="binding site">
    <location>
        <begin position="178"/>
        <end position="181"/>
    </location>
    <ligand>
        <name>ATP</name>
        <dbReference type="ChEBI" id="CHEBI:30616"/>
    </ligand>
</feature>
<feature type="binding site">
    <location>
        <position position="194"/>
    </location>
    <ligand>
        <name>ATP</name>
        <dbReference type="ChEBI" id="CHEBI:30616"/>
    </ligand>
</feature>
<feature type="modified residue" description="N-acetylserine" evidence="88">
    <location>
        <position position="2"/>
    </location>
</feature>
<feature type="modified residue" description="Phosphothreonine" evidence="85">
    <location>
        <position position="6"/>
    </location>
</feature>
<feature type="modified residue" description="Phosphoserine" evidence="85">
    <location>
        <position position="103"/>
    </location>
</feature>
<feature type="modified residue" description="Phosphoserine" evidence="83">
    <location>
        <position position="137"/>
    </location>
</feature>
<feature type="modified residue" description="Phosphothreonine; by AURKA" evidence="8 44 46 84 85 86 87 89">
    <location>
        <position position="210"/>
    </location>
</feature>
<feature type="modified residue" description="Phosphothreonine" evidence="84 85 86">
    <location>
        <position position="214"/>
    </location>
</feature>
<feature type="modified residue" description="Phosphoserine; by autocatalysis" evidence="1">
    <location>
        <position position="269"/>
    </location>
</feature>
<feature type="modified residue" description="Phosphoserine" evidence="9">
    <location>
        <position position="335"/>
    </location>
</feature>
<feature type="modified residue" description="Phosphoserine" evidence="85">
    <location>
        <position position="375"/>
    </location>
</feature>
<feature type="modified residue" description="Phosphoserine" evidence="85">
    <location>
        <position position="450"/>
    </location>
</feature>
<feature type="modified residue" description="Phosphothreonine" evidence="85">
    <location>
        <position position="498"/>
    </location>
</feature>
<feature type="cross-link" description="Glycyl lysine isopeptide (Lys-Gly) (interchain with G-Cter in ubiquitin)" evidence="47">
    <location>
        <position position="19"/>
    </location>
</feature>
<feature type="cross-link" description="Glycyl lysine isopeptide (Lys-Gly) (interchain with G-Cter in SUMO2)" evidence="90">
    <location>
        <position position="338"/>
    </location>
</feature>
<feature type="cross-link" description="Glycyl lysine isopeptide (Lys-Gly) (interchain with G-Cter in ubiquitin)" evidence="65">
    <location>
        <position position="492"/>
    </location>
</feature>
<feature type="sequence variant" id="VAR_041018" description="In a lung squamous cell carcinoma sample; somatic mutation; dbSNP:rs1959276494." evidence="33">
    <original>R</original>
    <variation>L</variation>
    <location>
        <position position="12"/>
    </location>
</feature>
<feature type="sequence variant" id="VAR_041019" description="In dbSNP:rs35056440." evidence="33">
    <original>L</original>
    <variation>F</variation>
    <location>
        <position position="261"/>
    </location>
</feature>
<feature type="sequence variant" id="VAR_051659" description="In dbSNP:rs16972799.">
    <original>N</original>
    <variation>D</variation>
    <location>
        <position position="297"/>
    </location>
</feature>
<feature type="sequence variant" id="VAR_041020" description="In dbSNP:rs45489499." evidence="33">
    <original>L</original>
    <variation>V</variation>
    <location>
        <position position="332"/>
    </location>
</feature>
<feature type="sequence variant" id="VAR_041021" description="In dbSNP:rs45569335." evidence="33">
    <original>L</original>
    <variation>H</variation>
    <location>
        <position position="463"/>
    </location>
</feature>
<feature type="sequence variant" id="VAR_041022" description="In dbSNP:rs56027600." evidence="33">
    <original>R</original>
    <variation>H</variation>
    <location>
        <position position="518"/>
    </location>
</feature>
<feature type="sequence variant" id="VAR_051660" description="In dbSNP:rs34001032.">
    <original>S</original>
    <variation>L</variation>
    <location>
        <position position="595"/>
    </location>
</feature>
<feature type="sequence variant" id="VAR_051661" description="In dbSNP:rs34954545.">
    <original>R</original>
    <variation>H</variation>
    <location>
        <position position="599"/>
    </location>
</feature>
<feature type="mutagenesis site" description="In analog-sensitive mutant; enlarged catalytic pocket to accommodate purine analogs; when associated with G-130." evidence="53">
    <original>C</original>
    <variation>V</variation>
    <location>
        <position position="67"/>
    </location>
</feature>
<feature type="mutagenesis site" description="Loss of kinase activity. No effect on S-phase progression." evidence="8 10 40 67">
    <original>K</original>
    <variation>M</variation>
    <location>
        <position position="82"/>
    </location>
</feature>
<feature type="mutagenesis site" description="Loss of kinase activity. No effect on RIOK2-binding." evidence="46 50 61">
    <original>K</original>
    <variation>R</variation>
    <location>
        <position position="82"/>
    </location>
</feature>
<feature type="mutagenesis site" description="In analog-sensitive mutant; enlarged catalytic pocket to accommodate purine analogs; when associated with V-67." evidence="53">
    <original>L</original>
    <variation>G</variation>
    <location>
        <position position="130"/>
    </location>
</feature>
<feature type="mutagenesis site" description="No change in activity. Increases activity and restores recovery after DNA damage checkpoint; when associated with D-210." evidence="8 46">
    <original>S</original>
    <variation>A</variation>
    <location>
        <position position="137"/>
    </location>
</feature>
<feature type="mutagenesis site" description="Increases activity. Results in a block in G1/S." evidence="8 46">
    <original>S</original>
    <variation>D</variation>
    <location>
        <position position="137"/>
    </location>
</feature>
<feature type="mutagenesis site" description="Abolishes kinase activity." evidence="46">
    <original>D</original>
    <variation>N</variation>
    <location>
        <position position="176"/>
    </location>
</feature>
<feature type="mutagenesis site" description="Does not interfere with FRY-binding." evidence="63">
    <original>D</original>
    <variation>A</variation>
    <location>
        <position position="194"/>
    </location>
</feature>
<feature type="mutagenesis site" description="Abolishes activity. Abolishes checkpoint recovery." evidence="8 10 36 46 50">
    <original>T</original>
    <variation>A</variation>
    <location>
        <position position="210"/>
    </location>
</feature>
<feature type="mutagenesis site" description="Increases activity and restores recovery after DNA damage checkpoint." evidence="8 10 36 46 50">
    <original>T</original>
    <variation>D</variation>
    <location>
        <position position="210"/>
    </location>
</feature>
<feature type="mutagenesis site" description="Reduced catalytic activity, but no effect on affinity for ATP." evidence="8 10 36 46 50">
    <original>T</original>
    <variation>V</variation>
    <location>
        <position position="210"/>
    </location>
</feature>
<feature type="mutagenesis site" description="Interferes with ubiquitination and subsequent proteasomal degradation in anaphase; when associated with A-340." evidence="18 47">
    <original>R</original>
    <variation>A</variation>
    <location>
        <position position="337"/>
    </location>
</feature>
<feature type="mutagenesis site" description="Interferes with ubiquitination and subsequent proteasomal degradation in anaphase; when associated with A-337." evidence="18 47">
    <original>L</original>
    <variation>A</variation>
    <location>
        <position position="340"/>
    </location>
</feature>
<feature type="mutagenesis site" description="Abolishes interaction with CDC25C and reduces centrosomal localization." evidence="31">
    <original>W</original>
    <variation>F</variation>
    <location>
        <position position="414"/>
    </location>
</feature>
<feature type="mutagenesis site" description="No effect on centrosomal localization, nor on S-phase progression; when asscociated with A-427. Loss of centrosomal localization and of S-phase progression; when associated with A- 415 and A-427." evidence="67">
    <original>W</original>
    <variation>F</variation>
    <location>
        <position position="414"/>
    </location>
</feature>
<feature type="mutagenesis site" description="Loss of centrosomal localization and of S-phase progression; when associated with A- 414 and A-427." evidence="67">
    <original>V</original>
    <variation>A</variation>
    <location>
        <position position="415"/>
    </location>
</feature>
<feature type="mutagenesis site" description="No effect on centrosomal localization, nor on S-phase progression; when associated with A-414. Loss of centrosomal localization and of S-phase progression; when associated with A- 414 and A-415." evidence="67">
    <original>L</original>
    <variation>A</variation>
    <location>
        <position position="427"/>
    </location>
</feature>
<feature type="mutagenesis site" description="Severe mitotic defects leading to prometaphase delay. Increased localization at kinetochores leading to increased levels of phosphorylated BUBR1." evidence="65">
    <original>K</original>
    <variation>R</variation>
    <location>
        <position position="492"/>
    </location>
</feature>
<feature type="mutagenesis site" description="In pincer mutant; loss of centrosomal location and decreased interaction with phosphorylated CDC25C and BUB1; when associated with M-540." evidence="16 27 44 53">
    <original>H</original>
    <variation>A</variation>
    <location>
        <position position="538"/>
    </location>
</feature>
<feature type="mutagenesis site" description="In pincer mutant; loss of centrosomal location and decreased interaction with phosphorylated CDC25C and BUB1; when associated with A-538." evidence="16 27 44 53">
    <original>K</original>
    <variation>M</variation>
    <location>
        <position position="540"/>
    </location>
</feature>
<feature type="sequence conflict" description="In Ref. 1; AAA56634." evidence="82" ref="1">
    <original>S</original>
    <variation>T</variation>
    <location>
        <position position="2"/>
    </location>
</feature>
<feature type="sequence conflict" description="In Ref. 1; AAA56634." evidence="82" ref="1">
    <original>A</original>
    <variation>P</variation>
    <location>
        <position position="11"/>
    </location>
</feature>
<feature type="sequence conflict" description="In Ref. 1; AAA56634." evidence="82" ref="1">
    <original>F</original>
    <variation>L</variation>
    <location>
        <position position="58"/>
    </location>
</feature>
<feature type="sequence conflict" description="In Ref. 1; AAA56634." evidence="82" ref="1">
    <original>G</original>
    <variation>S</variation>
    <location>
        <position position="60"/>
    </location>
</feature>
<feature type="sequence conflict" description="In Ref. 2; AAA36659 and 7; AAB36946." evidence="82" ref="2 7">
    <original>A</original>
    <variation>V</variation>
    <location>
        <position position="73"/>
    </location>
</feature>
<feature type="sequence conflict" description="In Ref. 6; CAA62260." evidence="82" ref="6">
    <original>N</original>
    <variation>T</variation>
    <location>
        <position position="123"/>
    </location>
</feature>
<feature type="sequence conflict" description="In Ref. 4; CAA53536." evidence="82" ref="4">
    <original>L</original>
    <variation>P</variation>
    <location>
        <position position="141"/>
    </location>
</feature>
<feature type="sequence conflict" description="In Ref. 4; CAA53536." evidence="82" ref="4">
    <original>G</original>
    <variation>E</variation>
    <location>
        <position position="227"/>
    </location>
</feature>
<feature type="sequence conflict" description="In Ref. 2; AAA36659." evidence="82" ref="2">
    <original>N</original>
    <variation>G</variation>
    <location>
        <position position="301"/>
    </location>
</feature>
<feature type="sequence conflict" description="In Ref. 2; AAA36659." evidence="82" ref="2">
    <original>A</original>
    <variation>G</variation>
    <location>
        <position position="495"/>
    </location>
</feature>
<feature type="sequence conflict" description="In Ref. 2; AAA36659." evidence="82" ref="2">
    <original>E</original>
    <variation>Q</variation>
    <location>
        <position position="501"/>
    </location>
</feature>
<feature type="strand" evidence="91">
    <location>
        <begin position="42"/>
        <end position="46"/>
    </location>
</feature>
<feature type="turn" evidence="91">
    <location>
        <begin position="47"/>
        <end position="50"/>
    </location>
</feature>
<feature type="strand" evidence="91">
    <location>
        <begin position="51"/>
        <end position="62"/>
    </location>
</feature>
<feature type="strand" evidence="91">
    <location>
        <begin position="65"/>
        <end position="72"/>
    </location>
</feature>
<feature type="turn" evidence="91">
    <location>
        <begin position="73"/>
        <end position="75"/>
    </location>
</feature>
<feature type="strand" evidence="91">
    <location>
        <begin position="78"/>
        <end position="85"/>
    </location>
</feature>
<feature type="helix" evidence="91">
    <location>
        <begin position="86"/>
        <end position="88"/>
    </location>
</feature>
<feature type="helix" evidence="91">
    <location>
        <begin position="92"/>
        <end position="106"/>
    </location>
</feature>
<feature type="strand" evidence="91">
    <location>
        <begin position="116"/>
        <end position="121"/>
    </location>
</feature>
<feature type="strand" evidence="91">
    <location>
        <begin position="123"/>
        <end position="131"/>
    </location>
</feature>
<feature type="helix" evidence="91">
    <location>
        <begin position="138"/>
        <end position="145"/>
    </location>
</feature>
<feature type="helix" evidence="91">
    <location>
        <begin position="150"/>
        <end position="169"/>
    </location>
</feature>
<feature type="helix" evidence="91">
    <location>
        <begin position="179"/>
        <end position="181"/>
    </location>
</feature>
<feature type="strand" evidence="91">
    <location>
        <begin position="182"/>
        <end position="184"/>
    </location>
</feature>
<feature type="strand" evidence="91">
    <location>
        <begin position="190"/>
        <end position="192"/>
    </location>
</feature>
<feature type="helix" evidence="91">
    <location>
        <begin position="220"/>
        <end position="223"/>
    </location>
</feature>
<feature type="strand" evidence="92">
    <location>
        <begin position="224"/>
        <end position="226"/>
    </location>
</feature>
<feature type="helix" evidence="91">
    <location>
        <begin position="231"/>
        <end position="246"/>
    </location>
</feature>
<feature type="helix" evidence="91">
    <location>
        <begin position="256"/>
        <end position="264"/>
    </location>
</feature>
<feature type="helix" evidence="91">
    <location>
        <begin position="276"/>
        <end position="285"/>
    </location>
</feature>
<feature type="helix" evidence="91">
    <location>
        <begin position="290"/>
        <end position="292"/>
    </location>
</feature>
<feature type="helix" evidence="91">
    <location>
        <begin position="296"/>
        <end position="301"/>
    </location>
</feature>
<feature type="helix" evidence="91">
    <location>
        <begin position="303"/>
        <end position="306"/>
    </location>
</feature>
<feature type="helix" evidence="91">
    <location>
        <begin position="316"/>
        <end position="319"/>
    </location>
</feature>
<feature type="helix" evidence="98">
    <location>
        <begin position="367"/>
        <end position="370"/>
    </location>
</feature>
<feature type="helix" evidence="97">
    <location>
        <begin position="374"/>
        <end position="386"/>
    </location>
</feature>
<feature type="helix" evidence="97">
    <location>
        <begin position="389"/>
        <end position="391"/>
    </location>
</feature>
<feature type="strand" evidence="93">
    <location>
        <begin position="392"/>
        <end position="394"/>
    </location>
</feature>
<feature type="helix" evidence="97">
    <location>
        <begin position="397"/>
        <end position="400"/>
    </location>
</feature>
<feature type="helix" evidence="97">
    <location>
        <begin position="403"/>
        <end position="405"/>
    </location>
</feature>
<feature type="strand" evidence="97">
    <location>
        <begin position="411"/>
        <end position="417"/>
    </location>
</feature>
<feature type="turn" evidence="97">
    <location>
        <begin position="418"/>
        <end position="421"/>
    </location>
</feature>
<feature type="strand" evidence="97">
    <location>
        <begin position="422"/>
        <end position="427"/>
    </location>
</feature>
<feature type="strand" evidence="97">
    <location>
        <begin position="432"/>
        <end position="436"/>
    </location>
</feature>
<feature type="strand" evidence="97">
    <location>
        <begin position="441"/>
        <end position="444"/>
    </location>
</feature>
<feature type="strand" evidence="97">
    <location>
        <begin position="448"/>
        <end position="454"/>
    </location>
</feature>
<feature type="strand" evidence="97">
    <location>
        <begin position="460"/>
        <end position="464"/>
    </location>
</feature>
<feature type="turn" evidence="94">
    <location>
        <begin position="465"/>
        <end position="467"/>
    </location>
</feature>
<feature type="helix" evidence="97">
    <location>
        <begin position="470"/>
        <end position="472"/>
    </location>
</feature>
<feature type="helix" evidence="97">
    <location>
        <begin position="473"/>
        <end position="488"/>
    </location>
</feature>
<feature type="turn" evidence="97">
    <location>
        <begin position="493"/>
        <end position="496"/>
    </location>
</feature>
<feature type="turn" evidence="93">
    <location>
        <begin position="503"/>
        <end position="505"/>
    </location>
</feature>
<feature type="strand" evidence="97">
    <location>
        <begin position="511"/>
        <end position="516"/>
    </location>
</feature>
<feature type="strand" evidence="97">
    <location>
        <begin position="518"/>
        <end position="525"/>
    </location>
</feature>
<feature type="turn" evidence="96">
    <location>
        <begin position="526"/>
        <end position="528"/>
    </location>
</feature>
<feature type="strand" evidence="97">
    <location>
        <begin position="530"/>
        <end position="534"/>
    </location>
</feature>
<feature type="turn" evidence="97">
    <location>
        <begin position="535"/>
        <end position="537"/>
    </location>
</feature>
<feature type="strand" evidence="97">
    <location>
        <begin position="540"/>
        <end position="544"/>
    </location>
</feature>
<feature type="turn" evidence="97">
    <location>
        <begin position="545"/>
        <end position="548"/>
    </location>
</feature>
<feature type="strand" evidence="97">
    <location>
        <begin position="549"/>
        <end position="553"/>
    </location>
</feature>
<feature type="strand" evidence="97">
    <location>
        <begin position="559"/>
        <end position="563"/>
    </location>
</feature>
<feature type="helix" evidence="97">
    <location>
        <begin position="564"/>
        <end position="570"/>
    </location>
</feature>
<feature type="helix" evidence="97">
    <location>
        <begin position="574"/>
        <end position="591"/>
    </location>
</feature>
<feature type="strand" evidence="95">
    <location>
        <begin position="593"/>
        <end position="595"/>
    </location>
</feature>
<feature type="strand" evidence="95">
    <location>
        <begin position="598"/>
        <end position="602"/>
    </location>
</feature>
<dbReference type="EC" id="2.7.11.21" evidence="7 8 61 74 79 80"/>
<dbReference type="EMBL" id="U01038">
    <property type="protein sequence ID" value="AAA56634.1"/>
    <property type="molecule type" value="mRNA"/>
</dbReference>
<dbReference type="EMBL" id="L19559">
    <property type="protein sequence ID" value="AAA36659.1"/>
    <property type="molecule type" value="mRNA"/>
</dbReference>
<dbReference type="EMBL" id="X73458">
    <property type="protein sequence ID" value="CAA51837.1"/>
    <property type="molecule type" value="mRNA"/>
</dbReference>
<dbReference type="EMBL" id="X75932">
    <property type="protein sequence ID" value="CAA53536.1"/>
    <property type="molecule type" value="mRNA"/>
</dbReference>
<dbReference type="EMBL" id="BC002369">
    <property type="protein sequence ID" value="AAH02369.1"/>
    <property type="molecule type" value="mRNA"/>
</dbReference>
<dbReference type="EMBL" id="BC003002">
    <property type="protein sequence ID" value="AAH03002.1"/>
    <property type="molecule type" value="mRNA"/>
</dbReference>
<dbReference type="EMBL" id="BC014846">
    <property type="protein sequence ID" value="AAH14846.1"/>
    <property type="molecule type" value="mRNA"/>
</dbReference>
<dbReference type="EMBL" id="X90725">
    <property type="protein sequence ID" value="CAA62260.1"/>
    <property type="molecule type" value="Genomic_DNA"/>
</dbReference>
<dbReference type="EMBL" id="U78073">
    <property type="protein sequence ID" value="AAB36946.1"/>
    <property type="molecule type" value="Genomic_DNA"/>
</dbReference>
<dbReference type="CCDS" id="CCDS10616.1"/>
<dbReference type="PIR" id="S34130">
    <property type="entry name" value="S34130"/>
</dbReference>
<dbReference type="RefSeq" id="NP_005021.2">
    <property type="nucleotide sequence ID" value="NM_005030.5"/>
</dbReference>
<dbReference type="PDB" id="1Q4K">
    <property type="method" value="X-ray"/>
    <property type="resolution" value="2.30 A"/>
    <property type="chains" value="A/B/C=345-603"/>
</dbReference>
<dbReference type="PDB" id="1Q4O">
    <property type="method" value="X-ray"/>
    <property type="resolution" value="2.20 A"/>
    <property type="chains" value="A/B=367-603"/>
</dbReference>
<dbReference type="PDB" id="1UMW">
    <property type="method" value="X-ray"/>
    <property type="resolution" value="1.90 A"/>
    <property type="chains" value="A/B=367-603"/>
</dbReference>
<dbReference type="PDB" id="2OGQ">
    <property type="method" value="X-ray"/>
    <property type="resolution" value="1.95 A"/>
    <property type="chains" value="A=365-603"/>
</dbReference>
<dbReference type="PDB" id="2OJX">
    <property type="method" value="X-ray"/>
    <property type="resolution" value="2.85 A"/>
    <property type="chains" value="A=365-603"/>
</dbReference>
<dbReference type="PDB" id="2OU7">
    <property type="method" value="X-ray"/>
    <property type="resolution" value="2.40 A"/>
    <property type="chains" value="A=13-345"/>
</dbReference>
<dbReference type="PDB" id="2OWB">
    <property type="method" value="X-ray"/>
    <property type="resolution" value="2.10 A"/>
    <property type="chains" value="A=13-345"/>
</dbReference>
<dbReference type="PDB" id="2RKU">
    <property type="method" value="X-ray"/>
    <property type="resolution" value="1.95 A"/>
    <property type="chains" value="A=37-330"/>
</dbReference>
<dbReference type="PDB" id="2V5Q">
    <property type="method" value="X-ray"/>
    <property type="resolution" value="2.30 A"/>
    <property type="chains" value="A/B=33-345"/>
</dbReference>
<dbReference type="PDB" id="2YAC">
    <property type="method" value="X-ray"/>
    <property type="resolution" value="2.20 A"/>
    <property type="chains" value="A=36-345"/>
</dbReference>
<dbReference type="PDB" id="3BZI">
    <property type="method" value="X-ray"/>
    <property type="resolution" value="2.10 A"/>
    <property type="chains" value="A=365-603"/>
</dbReference>
<dbReference type="PDB" id="3C5L">
    <property type="method" value="X-ray"/>
    <property type="resolution" value="2.33 A"/>
    <property type="chains" value="A=373-593"/>
</dbReference>
<dbReference type="PDB" id="3FC2">
    <property type="method" value="X-ray"/>
    <property type="resolution" value="2.45 A"/>
    <property type="chains" value="A=13-345"/>
</dbReference>
<dbReference type="PDB" id="3FVH">
    <property type="method" value="X-ray"/>
    <property type="resolution" value="1.58 A"/>
    <property type="chains" value="A=371-603"/>
</dbReference>
<dbReference type="PDB" id="3HIH">
    <property type="method" value="X-ray"/>
    <property type="resolution" value="1.70 A"/>
    <property type="chains" value="A/B=371-593"/>
</dbReference>
<dbReference type="PDB" id="3HIK">
    <property type="method" value="X-ray"/>
    <property type="resolution" value="1.77 A"/>
    <property type="chains" value="A=367-603"/>
</dbReference>
<dbReference type="PDB" id="3KB7">
    <property type="method" value="X-ray"/>
    <property type="resolution" value="2.50 A"/>
    <property type="chains" value="A=36-345"/>
</dbReference>
<dbReference type="PDB" id="3P2W">
    <property type="method" value="X-ray"/>
    <property type="resolution" value="1.66 A"/>
    <property type="chains" value="A=371-594"/>
</dbReference>
<dbReference type="PDB" id="3P2Z">
    <property type="method" value="X-ray"/>
    <property type="resolution" value="1.79 A"/>
    <property type="chains" value="A=371-594"/>
</dbReference>
<dbReference type="PDB" id="3P34">
    <property type="method" value="X-ray"/>
    <property type="resolution" value="1.40 A"/>
    <property type="chains" value="A=371-594"/>
</dbReference>
<dbReference type="PDB" id="3P35">
    <property type="method" value="X-ray"/>
    <property type="resolution" value="2.09 A"/>
    <property type="chains" value="A/B/C=371-594"/>
</dbReference>
<dbReference type="PDB" id="3P36">
    <property type="method" value="X-ray"/>
    <property type="resolution" value="1.59 A"/>
    <property type="chains" value="A=371-594"/>
</dbReference>
<dbReference type="PDB" id="3P37">
    <property type="method" value="X-ray"/>
    <property type="resolution" value="2.38 A"/>
    <property type="chains" value="A/B/C=371-594"/>
</dbReference>
<dbReference type="PDB" id="3Q1I">
    <property type="method" value="X-ray"/>
    <property type="resolution" value="1.40 A"/>
    <property type="chains" value="A=371-594"/>
</dbReference>
<dbReference type="PDB" id="3RQ7">
    <property type="method" value="X-ray"/>
    <property type="resolution" value="1.55 A"/>
    <property type="chains" value="A=371-603"/>
</dbReference>
<dbReference type="PDB" id="3THB">
    <property type="method" value="X-ray"/>
    <property type="resolution" value="2.50 A"/>
    <property type="chains" value="A=13-345"/>
</dbReference>
<dbReference type="PDB" id="4A4L">
    <property type="method" value="X-ray"/>
    <property type="resolution" value="2.35 A"/>
    <property type="chains" value="A=36-345"/>
</dbReference>
<dbReference type="PDB" id="4A4O">
    <property type="method" value="X-ray"/>
    <property type="resolution" value="2.70 A"/>
    <property type="chains" value="A=36-345"/>
</dbReference>
<dbReference type="PDB" id="4DFW">
    <property type="method" value="X-ray"/>
    <property type="resolution" value="1.55 A"/>
    <property type="chains" value="A=367-603"/>
</dbReference>
<dbReference type="PDB" id="4E67">
    <property type="method" value="X-ray"/>
    <property type="resolution" value="2.10 A"/>
    <property type="chains" value="A=371-594"/>
</dbReference>
<dbReference type="PDB" id="4E9C">
    <property type="method" value="X-ray"/>
    <property type="resolution" value="1.70 A"/>
    <property type="chains" value="A=371-594"/>
</dbReference>
<dbReference type="PDB" id="4E9D">
    <property type="method" value="X-ray"/>
    <property type="resolution" value="2.75 A"/>
    <property type="chains" value="A=371-594"/>
</dbReference>
<dbReference type="PDB" id="4H5X">
    <property type="method" value="X-ray"/>
    <property type="resolution" value="1.95 A"/>
    <property type="chains" value="A/B=367-603"/>
</dbReference>
<dbReference type="PDB" id="4H71">
    <property type="method" value="X-ray"/>
    <property type="resolution" value="1.93 A"/>
    <property type="chains" value="A/B=367-603"/>
</dbReference>
<dbReference type="PDB" id="4HAB">
    <property type="method" value="X-ray"/>
    <property type="resolution" value="2.65 A"/>
    <property type="chains" value="A/B/C=371-593"/>
</dbReference>
<dbReference type="PDB" id="4HCO">
    <property type="method" value="X-ray"/>
    <property type="resolution" value="2.75 A"/>
    <property type="chains" value="A/B=367-603"/>
</dbReference>
<dbReference type="PDB" id="4HY2">
    <property type="method" value="X-ray"/>
    <property type="resolution" value="2.00 A"/>
    <property type="chains" value="A=371-595"/>
</dbReference>
<dbReference type="PDB" id="4J52">
    <property type="method" value="X-ray"/>
    <property type="resolution" value="2.30 A"/>
    <property type="chains" value="A=38-330"/>
</dbReference>
<dbReference type="PDB" id="4J53">
    <property type="method" value="X-ray"/>
    <property type="resolution" value="2.50 A"/>
    <property type="chains" value="A=38-330"/>
</dbReference>
<dbReference type="PDB" id="4LKL">
    <property type="method" value="X-ray"/>
    <property type="resolution" value="1.58 A"/>
    <property type="chains" value="A=372-593"/>
</dbReference>
<dbReference type="PDB" id="4LKM">
    <property type="method" value="X-ray"/>
    <property type="resolution" value="2.00 A"/>
    <property type="chains" value="A/C=371-601"/>
</dbReference>
<dbReference type="PDB" id="4O56">
    <property type="method" value="X-ray"/>
    <property type="resolution" value="1.80 A"/>
    <property type="chains" value="A=367-603"/>
</dbReference>
<dbReference type="PDB" id="4O6W">
    <property type="method" value="X-ray"/>
    <property type="resolution" value="1.45 A"/>
    <property type="chains" value="A=371-603"/>
</dbReference>
<dbReference type="PDB" id="4O9W">
    <property type="method" value="X-ray"/>
    <property type="resolution" value="1.69 A"/>
    <property type="chains" value="A=373-594"/>
</dbReference>
<dbReference type="PDB" id="4RCP">
    <property type="method" value="X-ray"/>
    <property type="resolution" value="1.60 A"/>
    <property type="chains" value="A=372-599"/>
</dbReference>
<dbReference type="PDB" id="4WHH">
    <property type="method" value="X-ray"/>
    <property type="resolution" value="1.90 A"/>
    <property type="chains" value="A=371-603"/>
</dbReference>
<dbReference type="PDB" id="4WHK">
    <property type="method" value="X-ray"/>
    <property type="resolution" value="1.80 A"/>
    <property type="chains" value="A=371-603"/>
</dbReference>
<dbReference type="PDB" id="4WHL">
    <property type="method" value="X-ray"/>
    <property type="resolution" value="2.71 A"/>
    <property type="chains" value="A=371-603"/>
</dbReference>
<dbReference type="PDB" id="4X9R">
    <property type="method" value="X-ray"/>
    <property type="resolution" value="1.40 A"/>
    <property type="chains" value="A=371-603"/>
</dbReference>
<dbReference type="PDB" id="4X9V">
    <property type="method" value="X-ray"/>
    <property type="resolution" value="1.43 A"/>
    <property type="chains" value="A=371-603"/>
</dbReference>
<dbReference type="PDB" id="4X9W">
    <property type="method" value="X-ray"/>
    <property type="resolution" value="1.80 A"/>
    <property type="chains" value="A=371-603"/>
</dbReference>
<dbReference type="PDB" id="5J19">
    <property type="method" value="X-ray"/>
    <property type="resolution" value="2.00 A"/>
    <property type="chains" value="A/B=367-594"/>
</dbReference>
<dbReference type="PDB" id="5NEI">
    <property type="method" value="X-ray"/>
    <property type="resolution" value="2.68 A"/>
    <property type="chains" value="A=371-603"/>
</dbReference>
<dbReference type="PDB" id="5NFU">
    <property type="method" value="X-ray"/>
    <property type="resolution" value="1.81 A"/>
    <property type="chains" value="A=371-602"/>
</dbReference>
<dbReference type="PDB" id="5NJE">
    <property type="method" value="X-ray"/>
    <property type="resolution" value="1.98 A"/>
    <property type="chains" value="A=371-603"/>
</dbReference>
<dbReference type="PDB" id="5NMM">
    <property type="method" value="X-ray"/>
    <property type="resolution" value="2.02 A"/>
    <property type="chains" value="A=371-603"/>
</dbReference>
<dbReference type="PDB" id="5NN1">
    <property type="method" value="X-ray"/>
    <property type="resolution" value="1.78 A"/>
    <property type="chains" value="A=371-603"/>
</dbReference>
<dbReference type="PDB" id="5NN2">
    <property type="method" value="X-ray"/>
    <property type="resolution" value="1.81 A"/>
    <property type="chains" value="A=371-594"/>
</dbReference>
<dbReference type="PDB" id="5TA6">
    <property type="method" value="X-ray"/>
    <property type="resolution" value="2.50 A"/>
    <property type="chains" value="A=13-345"/>
</dbReference>
<dbReference type="PDB" id="5TA8">
    <property type="method" value="X-ray"/>
    <property type="resolution" value="2.60 A"/>
    <property type="chains" value="A=13-345"/>
</dbReference>
<dbReference type="PDB" id="6AX4">
    <property type="method" value="X-ray"/>
    <property type="resolution" value="1.45 A"/>
    <property type="chains" value="A=371-603"/>
</dbReference>
<dbReference type="PDB" id="6GY2">
    <property type="method" value="X-ray"/>
    <property type="resolution" value="3.11 A"/>
    <property type="chains" value="A/B=365-603"/>
</dbReference>
<dbReference type="PDB" id="7MSO">
    <property type="method" value="X-ray"/>
    <property type="resolution" value="1.85 A"/>
    <property type="chains" value="A/B=371-603"/>
</dbReference>
<dbReference type="PDB" id="7MX1">
    <property type="method" value="X-ray"/>
    <property type="resolution" value="1.64 A"/>
    <property type="chains" value="A/B=371-603"/>
</dbReference>
<dbReference type="PDB" id="8BJT">
    <property type="method" value="X-ray"/>
    <property type="resolution" value="2.19 A"/>
    <property type="chains" value="A=37-330"/>
</dbReference>
<dbReference type="PDB" id="8CRC">
    <property type="method" value="X-ray"/>
    <property type="resolution" value="1.65 A"/>
    <property type="chains" value="A=371-594"/>
</dbReference>
<dbReference type="PDB" id="8JOQ">
    <property type="method" value="X-ray"/>
    <property type="resolution" value="1.80 A"/>
    <property type="chains" value="A=371-594"/>
</dbReference>
<dbReference type="PDB" id="8JOY">
    <property type="method" value="X-ray"/>
    <property type="resolution" value="2.61 A"/>
    <property type="chains" value="A=371-594"/>
</dbReference>
<dbReference type="PDB" id="8S30">
    <property type="method" value="X-ray"/>
    <property type="resolution" value="1.94 A"/>
    <property type="chains" value="A=365-603"/>
</dbReference>
<dbReference type="PDB" id="8S31">
    <property type="method" value="X-ray"/>
    <property type="resolution" value="2.13 A"/>
    <property type="chains" value="A/B=365-603"/>
</dbReference>
<dbReference type="PDB" id="8WFP">
    <property type="method" value="X-ray"/>
    <property type="resolution" value="1.99 A"/>
    <property type="chains" value="A/B=373-596"/>
</dbReference>
<dbReference type="PDB" id="8X72">
    <property type="method" value="X-ray"/>
    <property type="resolution" value="2.20 A"/>
    <property type="chains" value="A=13-345"/>
</dbReference>
<dbReference type="PDB" id="8XB9">
    <property type="method" value="X-ray"/>
    <property type="resolution" value="1.95 A"/>
    <property type="chains" value="A=371-603"/>
</dbReference>
<dbReference type="PDBsum" id="1Q4K"/>
<dbReference type="PDBsum" id="1Q4O"/>
<dbReference type="PDBsum" id="1UMW"/>
<dbReference type="PDBsum" id="2OGQ"/>
<dbReference type="PDBsum" id="2OJX"/>
<dbReference type="PDBsum" id="2OU7"/>
<dbReference type="PDBsum" id="2OWB"/>
<dbReference type="PDBsum" id="2RKU"/>
<dbReference type="PDBsum" id="2V5Q"/>
<dbReference type="PDBsum" id="2YAC"/>
<dbReference type="PDBsum" id="3BZI"/>
<dbReference type="PDBsum" id="3C5L"/>
<dbReference type="PDBsum" id="3FC2"/>
<dbReference type="PDBsum" id="3FVH"/>
<dbReference type="PDBsum" id="3HIH"/>
<dbReference type="PDBsum" id="3HIK"/>
<dbReference type="PDBsum" id="3KB7"/>
<dbReference type="PDBsum" id="3P2W"/>
<dbReference type="PDBsum" id="3P2Z"/>
<dbReference type="PDBsum" id="3P34"/>
<dbReference type="PDBsum" id="3P35"/>
<dbReference type="PDBsum" id="3P36"/>
<dbReference type="PDBsum" id="3P37"/>
<dbReference type="PDBsum" id="3Q1I"/>
<dbReference type="PDBsum" id="3RQ7"/>
<dbReference type="PDBsum" id="3THB"/>
<dbReference type="PDBsum" id="4A4L"/>
<dbReference type="PDBsum" id="4A4O"/>
<dbReference type="PDBsum" id="4DFW"/>
<dbReference type="PDBsum" id="4E67"/>
<dbReference type="PDBsum" id="4E9C"/>
<dbReference type="PDBsum" id="4E9D"/>
<dbReference type="PDBsum" id="4H5X"/>
<dbReference type="PDBsum" id="4H71"/>
<dbReference type="PDBsum" id="4HAB"/>
<dbReference type="PDBsum" id="4HCO"/>
<dbReference type="PDBsum" id="4HY2"/>
<dbReference type="PDBsum" id="4J52"/>
<dbReference type="PDBsum" id="4J53"/>
<dbReference type="PDBsum" id="4LKL"/>
<dbReference type="PDBsum" id="4LKM"/>
<dbReference type="PDBsum" id="4O56"/>
<dbReference type="PDBsum" id="4O6W"/>
<dbReference type="PDBsum" id="4O9W"/>
<dbReference type="PDBsum" id="4RCP"/>
<dbReference type="PDBsum" id="4WHH"/>
<dbReference type="PDBsum" id="4WHK"/>
<dbReference type="PDBsum" id="4WHL"/>
<dbReference type="PDBsum" id="4X9R"/>
<dbReference type="PDBsum" id="4X9V"/>
<dbReference type="PDBsum" id="4X9W"/>
<dbReference type="PDBsum" id="5J19"/>
<dbReference type="PDBsum" id="5NEI"/>
<dbReference type="PDBsum" id="5NFU"/>
<dbReference type="PDBsum" id="5NJE"/>
<dbReference type="PDBsum" id="5NMM"/>
<dbReference type="PDBsum" id="5NN1"/>
<dbReference type="PDBsum" id="5NN2"/>
<dbReference type="PDBsum" id="5TA6"/>
<dbReference type="PDBsum" id="5TA8"/>
<dbReference type="PDBsum" id="6AX4"/>
<dbReference type="PDBsum" id="6GY2"/>
<dbReference type="PDBsum" id="7MSO"/>
<dbReference type="PDBsum" id="7MX1"/>
<dbReference type="PDBsum" id="8BJT"/>
<dbReference type="PDBsum" id="8CRC"/>
<dbReference type="PDBsum" id="8JOQ"/>
<dbReference type="PDBsum" id="8JOY"/>
<dbReference type="PDBsum" id="8S30"/>
<dbReference type="PDBsum" id="8S31"/>
<dbReference type="PDBsum" id="8WFP"/>
<dbReference type="PDBsum" id="8X72"/>
<dbReference type="PDBsum" id="8XB9"/>
<dbReference type="SMR" id="P53350"/>
<dbReference type="BioGRID" id="111362">
    <property type="interactions" value="853"/>
</dbReference>
<dbReference type="CORUM" id="P53350"/>
<dbReference type="DIP" id="DIP-29696N"/>
<dbReference type="ELM" id="P53350"/>
<dbReference type="FunCoup" id="P53350">
    <property type="interactions" value="1626"/>
</dbReference>
<dbReference type="IntAct" id="P53350">
    <property type="interactions" value="292"/>
</dbReference>
<dbReference type="MINT" id="P53350"/>
<dbReference type="STRING" id="9606.ENSP00000300093"/>
<dbReference type="BindingDB" id="P53350"/>
<dbReference type="ChEMBL" id="CHEMBL3024"/>
<dbReference type="DrugBank" id="DB07789">
    <property type="generic name" value="1-[5-Methyl-2-(trifluoromethyl)furan-3-yl]-3-[5-[2-[[6-(1H-1,2,4-triazol-5-ylamino)pyrimidin-4-yl]amino]ethyl]-1,3-thiazol-2-yl]urea"/>
</dbReference>
<dbReference type="DrugBank" id="DB06963">
    <property type="generic name" value="3-[3-(3-methyl-6-{[(1S)-1-phenylethyl]amino}-1H-pyrazolo[4,3-c]pyridin-1-yl)phenyl]propanamide"/>
</dbReference>
<dbReference type="DrugBank" id="DB06897">
    <property type="generic name" value="3-[3-chloro-5-(5-{[(1S)-1-phenylethyl]amino}isoxazolo[5,4-c]pyridin-3-yl)phenyl]propan-1-ol"/>
</dbReference>
<dbReference type="DrugBank" id="DB07186">
    <property type="generic name" value="4-(4-METHYLPIPERAZIN-1-YL)-N-[5-(2-THIENYLACETYL)-1,5-DIHYDROPYRROLO[3,4-C]PYRAZOL-3-YL]BENZAMIDE"/>
</dbReference>
<dbReference type="DrugBank" id="DB16107">
    <property type="generic name" value="BI 2536"/>
</dbReference>
<dbReference type="DrugBank" id="DB12010">
    <property type="generic name" value="Fostamatinib"/>
</dbReference>
<dbReference type="DrugBank" id="DB12763">
    <property type="generic name" value="MK-1496"/>
</dbReference>
<dbReference type="DrugBank" id="DB15110">
    <property type="generic name" value="Onvansertib"/>
</dbReference>
<dbReference type="DrugBank" id="DB12146">
    <property type="generic name" value="Rigosertib"/>
</dbReference>
<dbReference type="DrugBank" id="DB12062">
    <property type="generic name" value="Volasertib"/>
</dbReference>
<dbReference type="DrugBank" id="DB08059">
    <property type="generic name" value="Wortmannin"/>
</dbReference>
<dbReference type="DrugCentral" id="P53350"/>
<dbReference type="GuidetoPHARMACOLOGY" id="2168"/>
<dbReference type="MoonDB" id="P53350">
    <property type="type" value="Curated"/>
</dbReference>
<dbReference type="GlyGen" id="P53350">
    <property type="glycosylation" value="2 sites, 1 O-linked glycan (1 site)"/>
</dbReference>
<dbReference type="iPTMnet" id="P53350"/>
<dbReference type="PhosphoSitePlus" id="P53350"/>
<dbReference type="SwissPalm" id="P53350"/>
<dbReference type="BioMuta" id="PLK1"/>
<dbReference type="DMDM" id="1709658"/>
<dbReference type="CPTAC" id="CPTAC-1264"/>
<dbReference type="CPTAC" id="CPTAC-1326"/>
<dbReference type="CPTAC" id="CPTAC-1327"/>
<dbReference type="CPTAC" id="CPTAC-2908"/>
<dbReference type="CPTAC" id="CPTAC-2909"/>
<dbReference type="jPOST" id="P53350"/>
<dbReference type="MassIVE" id="P53350"/>
<dbReference type="PaxDb" id="9606-ENSP00000300093"/>
<dbReference type="PeptideAtlas" id="P53350"/>
<dbReference type="ProteomicsDB" id="56569"/>
<dbReference type="Pumba" id="P53350"/>
<dbReference type="ABCD" id="P53350">
    <property type="antibodies" value="1 sequenced antibody"/>
</dbReference>
<dbReference type="Antibodypedia" id="12634">
    <property type="antibodies" value="1233 antibodies from 47 providers"/>
</dbReference>
<dbReference type="DNASU" id="5347"/>
<dbReference type="Ensembl" id="ENST00000300093.9">
    <property type="protein sequence ID" value="ENSP00000300093.4"/>
    <property type="gene ID" value="ENSG00000166851.15"/>
</dbReference>
<dbReference type="GeneID" id="5347"/>
<dbReference type="KEGG" id="hsa:5347"/>
<dbReference type="MANE-Select" id="ENST00000300093.9">
    <property type="protein sequence ID" value="ENSP00000300093.4"/>
    <property type="RefSeq nucleotide sequence ID" value="NM_005030.6"/>
    <property type="RefSeq protein sequence ID" value="NP_005021.2"/>
</dbReference>
<dbReference type="UCSC" id="uc002dlz.2">
    <property type="organism name" value="human"/>
</dbReference>
<dbReference type="AGR" id="HGNC:9077"/>
<dbReference type="CTD" id="5347"/>
<dbReference type="DisGeNET" id="5347"/>
<dbReference type="GeneCards" id="PLK1"/>
<dbReference type="HGNC" id="HGNC:9077">
    <property type="gene designation" value="PLK1"/>
</dbReference>
<dbReference type="HPA" id="ENSG00000166851">
    <property type="expression patterns" value="Tissue enhanced (bone marrow, lymphoid tissue, testis)"/>
</dbReference>
<dbReference type="MalaCards" id="PLK1"/>
<dbReference type="MIM" id="602098">
    <property type="type" value="gene"/>
</dbReference>
<dbReference type="neXtProt" id="NX_P53350"/>
<dbReference type="OpenTargets" id="ENSG00000166851"/>
<dbReference type="PharmGKB" id="PA33410"/>
<dbReference type="VEuPathDB" id="HostDB:ENSG00000166851"/>
<dbReference type="eggNOG" id="KOG0575">
    <property type="taxonomic scope" value="Eukaryota"/>
</dbReference>
<dbReference type="GeneTree" id="ENSGT00940000157752"/>
<dbReference type="HOGENOM" id="CLU_000288_46_1_1"/>
<dbReference type="InParanoid" id="P53350"/>
<dbReference type="OMA" id="IQIHKSM"/>
<dbReference type="OrthoDB" id="408964at2759"/>
<dbReference type="PAN-GO" id="P53350">
    <property type="GO annotations" value="7 GO annotations based on evolutionary models"/>
</dbReference>
<dbReference type="PhylomeDB" id="P53350"/>
<dbReference type="TreeFam" id="TF101089"/>
<dbReference type="BRENDA" id="2.7.11.21">
    <property type="organism ID" value="2681"/>
</dbReference>
<dbReference type="PathwayCommons" id="P53350"/>
<dbReference type="Reactome" id="R-HSA-141444">
    <property type="pathway name" value="Amplification of signal from unattached kinetochores via a MAD2 inhibitory signal"/>
</dbReference>
<dbReference type="Reactome" id="R-HSA-156711">
    <property type="pathway name" value="Polo-like kinase mediated events"/>
</dbReference>
<dbReference type="Reactome" id="R-HSA-162658">
    <property type="pathway name" value="Golgi Cisternae Pericentriolar Stack Reorganization"/>
</dbReference>
<dbReference type="Reactome" id="R-HSA-174178">
    <property type="pathway name" value="APC/C:Cdh1 mediated degradation of Cdc20 and other APC/C:Cdh1 targeted proteins in late mitosis/early G1"/>
</dbReference>
<dbReference type="Reactome" id="R-HSA-176412">
    <property type="pathway name" value="Phosphorylation of the APC/C"/>
</dbReference>
<dbReference type="Reactome" id="R-HSA-176417">
    <property type="pathway name" value="Phosphorylation of Emi1"/>
</dbReference>
<dbReference type="Reactome" id="R-HSA-2299718">
    <property type="pathway name" value="Condensation of Prophase Chromosomes"/>
</dbReference>
<dbReference type="Reactome" id="R-HSA-2467813">
    <property type="pathway name" value="Separation of Sister Chromatids"/>
</dbReference>
<dbReference type="Reactome" id="R-HSA-2500257">
    <property type="pathway name" value="Resolution of Sister Chromatid Cohesion"/>
</dbReference>
<dbReference type="Reactome" id="R-HSA-2565942">
    <property type="pathway name" value="Regulation of PLK1 Activity at G2/M Transition"/>
</dbReference>
<dbReference type="Reactome" id="R-HSA-2980767">
    <property type="pathway name" value="Activation of NIMA Kinases NEK9, NEK6, NEK7"/>
</dbReference>
<dbReference type="Reactome" id="R-HSA-380259">
    <property type="pathway name" value="Loss of Nlp from mitotic centrosomes"/>
</dbReference>
<dbReference type="Reactome" id="R-HSA-380270">
    <property type="pathway name" value="Recruitment of mitotic centrosome proteins and complexes"/>
</dbReference>
<dbReference type="Reactome" id="R-HSA-380284">
    <property type="pathway name" value="Loss of proteins required for interphase microtubule organization from the centrosome"/>
</dbReference>
<dbReference type="Reactome" id="R-HSA-380320">
    <property type="pathway name" value="Recruitment of NuMA to mitotic centrosomes"/>
</dbReference>
<dbReference type="Reactome" id="R-HSA-5620912">
    <property type="pathway name" value="Anchoring of the basal body to the plasma membrane"/>
</dbReference>
<dbReference type="Reactome" id="R-HSA-5663220">
    <property type="pathway name" value="RHO GTPases Activate Formins"/>
</dbReference>
<dbReference type="Reactome" id="R-HSA-68877">
    <property type="pathway name" value="Mitotic Prometaphase"/>
</dbReference>
<dbReference type="Reactome" id="R-HSA-68881">
    <property type="pathway name" value="Mitotic Metaphase/Anaphase Transition"/>
</dbReference>
<dbReference type="Reactome" id="R-HSA-68884">
    <property type="pathway name" value="Mitotic Telophase/Cytokinesis"/>
</dbReference>
<dbReference type="Reactome" id="R-HSA-69273">
    <property type="pathway name" value="Cyclin A/B1/B2 associated events during G2/M transition"/>
</dbReference>
<dbReference type="Reactome" id="R-HSA-8852276">
    <property type="pathway name" value="The role of GTSE1 in G2/M progression after G2 checkpoint"/>
</dbReference>
<dbReference type="Reactome" id="R-HSA-8854518">
    <property type="pathway name" value="AURKA Activation by TPX2"/>
</dbReference>
<dbReference type="Reactome" id="R-HSA-9648025">
    <property type="pathway name" value="EML4 and NUDC in mitotic spindle formation"/>
</dbReference>
<dbReference type="Reactome" id="R-HSA-9825892">
    <property type="pathway name" value="Regulation of MITF-M-dependent genes involved in cell cycle and proliferation"/>
</dbReference>
<dbReference type="SignaLink" id="P53350"/>
<dbReference type="SIGNOR" id="P53350"/>
<dbReference type="BioGRID-ORCS" id="5347">
    <property type="hits" value="876 hits in 1186 CRISPR screens"/>
</dbReference>
<dbReference type="CD-CODE" id="8C2F96ED">
    <property type="entry name" value="Centrosome"/>
</dbReference>
<dbReference type="ChiTaRS" id="PLK1">
    <property type="organism name" value="human"/>
</dbReference>
<dbReference type="EvolutionaryTrace" id="P53350"/>
<dbReference type="GeneWiki" id="PLK1"/>
<dbReference type="GenomeRNAi" id="5347"/>
<dbReference type="Pharos" id="P53350">
    <property type="development level" value="Tchem"/>
</dbReference>
<dbReference type="PRO" id="PR:P53350"/>
<dbReference type="Proteomes" id="UP000005640">
    <property type="component" value="Chromosome 16"/>
</dbReference>
<dbReference type="RNAct" id="P53350">
    <property type="molecule type" value="protein"/>
</dbReference>
<dbReference type="Bgee" id="ENSG00000166851">
    <property type="expression patterns" value="Expressed in ventricular zone and 103 other cell types or tissues"/>
</dbReference>
<dbReference type="ExpressionAtlas" id="P53350">
    <property type="expression patterns" value="baseline and differential"/>
</dbReference>
<dbReference type="GO" id="GO:0034451">
    <property type="term" value="C:centriolar satellite"/>
    <property type="evidence" value="ECO:0007669"/>
    <property type="project" value="Ensembl"/>
</dbReference>
<dbReference type="GO" id="GO:0005814">
    <property type="term" value="C:centriole"/>
    <property type="evidence" value="ECO:0007669"/>
    <property type="project" value="Ensembl"/>
</dbReference>
<dbReference type="GO" id="GO:0005813">
    <property type="term" value="C:centrosome"/>
    <property type="evidence" value="ECO:0000314"/>
    <property type="project" value="UniProtKB"/>
</dbReference>
<dbReference type="GO" id="GO:0000785">
    <property type="term" value="C:chromatin"/>
    <property type="evidence" value="ECO:0007669"/>
    <property type="project" value="Ensembl"/>
</dbReference>
<dbReference type="GO" id="GO:0005737">
    <property type="term" value="C:cytoplasm"/>
    <property type="evidence" value="ECO:0000318"/>
    <property type="project" value="GO_Central"/>
</dbReference>
<dbReference type="GO" id="GO:0005829">
    <property type="term" value="C:cytosol"/>
    <property type="evidence" value="ECO:0000304"/>
    <property type="project" value="Reactome"/>
</dbReference>
<dbReference type="GO" id="GO:0000776">
    <property type="term" value="C:kinetochore"/>
    <property type="evidence" value="ECO:0000314"/>
    <property type="project" value="UniProtKB"/>
</dbReference>
<dbReference type="GO" id="GO:0015630">
    <property type="term" value="C:microtubule cytoskeleton"/>
    <property type="evidence" value="ECO:0000314"/>
    <property type="project" value="BHF-UCL"/>
</dbReference>
<dbReference type="GO" id="GO:0030496">
    <property type="term" value="C:midbody"/>
    <property type="evidence" value="ECO:0000314"/>
    <property type="project" value="UniProtKB"/>
</dbReference>
<dbReference type="GO" id="GO:0097431">
    <property type="term" value="C:mitotic spindle pole"/>
    <property type="evidence" value="ECO:0007669"/>
    <property type="project" value="Ensembl"/>
</dbReference>
<dbReference type="GO" id="GO:0005654">
    <property type="term" value="C:nucleoplasm"/>
    <property type="evidence" value="ECO:0000304"/>
    <property type="project" value="Reactome"/>
</dbReference>
<dbReference type="GO" id="GO:0005634">
    <property type="term" value="C:nucleus"/>
    <property type="evidence" value="ECO:0000314"/>
    <property type="project" value="UniProtKB"/>
</dbReference>
<dbReference type="GO" id="GO:0000940">
    <property type="term" value="C:outer kinetochore"/>
    <property type="evidence" value="ECO:0000314"/>
    <property type="project" value="BHF-UCL"/>
</dbReference>
<dbReference type="GO" id="GO:0005819">
    <property type="term" value="C:spindle"/>
    <property type="evidence" value="ECO:0000314"/>
    <property type="project" value="UniProtKB"/>
</dbReference>
<dbReference type="GO" id="GO:0051233">
    <property type="term" value="C:spindle midzone"/>
    <property type="evidence" value="ECO:0000314"/>
    <property type="project" value="UniProtKB"/>
</dbReference>
<dbReference type="GO" id="GO:0000922">
    <property type="term" value="C:spindle pole"/>
    <property type="evidence" value="ECO:0000314"/>
    <property type="project" value="MGI"/>
</dbReference>
<dbReference type="GO" id="GO:0000795">
    <property type="term" value="C:synaptonemal complex"/>
    <property type="evidence" value="ECO:0007669"/>
    <property type="project" value="Ensembl"/>
</dbReference>
<dbReference type="GO" id="GO:0010997">
    <property type="term" value="F:anaphase-promoting complex binding"/>
    <property type="evidence" value="ECO:0000353"/>
    <property type="project" value="UniProtKB"/>
</dbReference>
<dbReference type="GO" id="GO:0005524">
    <property type="term" value="F:ATP binding"/>
    <property type="evidence" value="ECO:0000315"/>
    <property type="project" value="CAFA"/>
</dbReference>
<dbReference type="GO" id="GO:0042802">
    <property type="term" value="F:identical protein binding"/>
    <property type="evidence" value="ECO:0000353"/>
    <property type="project" value="IntAct"/>
</dbReference>
<dbReference type="GO" id="GO:0000287">
    <property type="term" value="F:magnesium ion binding"/>
    <property type="evidence" value="ECO:0000315"/>
    <property type="project" value="CAFA"/>
</dbReference>
<dbReference type="GO" id="GO:0008017">
    <property type="term" value="F:microtubule binding"/>
    <property type="evidence" value="ECO:0000314"/>
    <property type="project" value="UniProtKB"/>
</dbReference>
<dbReference type="GO" id="GO:0004672">
    <property type="term" value="F:protein kinase activity"/>
    <property type="evidence" value="ECO:0000314"/>
    <property type="project" value="UniProtKB"/>
</dbReference>
<dbReference type="GO" id="GO:0019901">
    <property type="term" value="F:protein kinase binding"/>
    <property type="evidence" value="ECO:0000353"/>
    <property type="project" value="UniProtKB"/>
</dbReference>
<dbReference type="GO" id="GO:0106310">
    <property type="term" value="F:protein serine kinase activity"/>
    <property type="evidence" value="ECO:0000314"/>
    <property type="project" value="UniProt"/>
</dbReference>
<dbReference type="GO" id="GO:0004674">
    <property type="term" value="F:protein serine/threonine kinase activity"/>
    <property type="evidence" value="ECO:0000314"/>
    <property type="project" value="UniProtKB"/>
</dbReference>
<dbReference type="GO" id="GO:0007098">
    <property type="term" value="P:centrosome cycle"/>
    <property type="evidence" value="ECO:0000315"/>
    <property type="project" value="UniProtKB"/>
</dbReference>
<dbReference type="GO" id="GO:0006302">
    <property type="term" value="P:double-strand break repair"/>
    <property type="evidence" value="ECO:0000314"/>
    <property type="project" value="UniProtKB"/>
</dbReference>
<dbReference type="GO" id="GO:0097681">
    <property type="term" value="P:double-strand break repair via alternative nonhomologous end joining"/>
    <property type="evidence" value="ECO:0000314"/>
    <property type="project" value="UniProt"/>
</dbReference>
<dbReference type="GO" id="GO:0000132">
    <property type="term" value="P:establishment of mitotic spindle orientation"/>
    <property type="evidence" value="ECO:0000314"/>
    <property type="project" value="UniProtKB"/>
</dbReference>
<dbReference type="GO" id="GO:0045184">
    <property type="term" value="P:establishment of protein localization"/>
    <property type="evidence" value="ECO:0000315"/>
    <property type="project" value="MGI"/>
</dbReference>
<dbReference type="GO" id="GO:0016321">
    <property type="term" value="P:female meiosis chromosome segregation"/>
    <property type="evidence" value="ECO:0007669"/>
    <property type="project" value="Ensembl"/>
</dbReference>
<dbReference type="GO" id="GO:0000086">
    <property type="term" value="P:G2/M transition of mitotic cell cycle"/>
    <property type="evidence" value="ECO:0000314"/>
    <property type="project" value="UniProtKB"/>
</dbReference>
<dbReference type="GO" id="GO:0048313">
    <property type="term" value="P:Golgi inheritance"/>
    <property type="evidence" value="ECO:0000304"/>
    <property type="project" value="Reactome"/>
</dbReference>
<dbReference type="GO" id="GO:0045143">
    <property type="term" value="P:homologous chromosome segregation"/>
    <property type="evidence" value="ECO:0007669"/>
    <property type="project" value="Ensembl"/>
</dbReference>
<dbReference type="GO" id="GO:0007091">
    <property type="term" value="P:metaphase/anaphase transition of mitotic cell cycle"/>
    <property type="evidence" value="ECO:0000304"/>
    <property type="project" value="Reactome"/>
</dbReference>
<dbReference type="GO" id="GO:0001578">
    <property type="term" value="P:microtubule bundle formation"/>
    <property type="evidence" value="ECO:0000314"/>
    <property type="project" value="UniProtKB"/>
</dbReference>
<dbReference type="GO" id="GO:0000278">
    <property type="term" value="P:mitotic cell cycle"/>
    <property type="evidence" value="ECO:0000314"/>
    <property type="project" value="UniProtKB"/>
</dbReference>
<dbReference type="GO" id="GO:0007076">
    <property type="term" value="P:mitotic chromosome condensation"/>
    <property type="evidence" value="ECO:0000304"/>
    <property type="project" value="Reactome"/>
</dbReference>
<dbReference type="GO" id="GO:0000281">
    <property type="term" value="P:mitotic cytokinesis"/>
    <property type="evidence" value="ECO:0000314"/>
    <property type="project" value="UniProtKB"/>
</dbReference>
<dbReference type="GO" id="GO:0007095">
    <property type="term" value="P:mitotic G2 DNA damage checkpoint signaling"/>
    <property type="evidence" value="ECO:0000314"/>
    <property type="project" value="UniProtKB"/>
</dbReference>
<dbReference type="GO" id="GO:0007077">
    <property type="term" value="P:mitotic nuclear membrane disassembly"/>
    <property type="evidence" value="ECO:0000304"/>
    <property type="project" value="Reactome"/>
</dbReference>
<dbReference type="GO" id="GO:0000070">
    <property type="term" value="P:mitotic sister chromatid segregation"/>
    <property type="evidence" value="ECO:0000315"/>
    <property type="project" value="UniProtKB"/>
</dbReference>
<dbReference type="GO" id="GO:0007094">
    <property type="term" value="P:mitotic spindle assembly checkpoint signaling"/>
    <property type="evidence" value="ECO:0000315"/>
    <property type="project" value="UniProtKB"/>
</dbReference>
<dbReference type="GO" id="GO:0007052">
    <property type="term" value="P:mitotic spindle organization"/>
    <property type="evidence" value="ECO:0000318"/>
    <property type="project" value="GO_Central"/>
</dbReference>
<dbReference type="GO" id="GO:0043066">
    <property type="term" value="P:negative regulation of apoptotic process"/>
    <property type="evidence" value="ECO:0000315"/>
    <property type="project" value="UniProtKB"/>
</dbReference>
<dbReference type="GO" id="GO:2000042">
    <property type="term" value="P:negative regulation of double-strand break repair via homologous recombination"/>
    <property type="evidence" value="ECO:0000314"/>
    <property type="project" value="UniProtKB"/>
</dbReference>
<dbReference type="GO" id="GO:0000122">
    <property type="term" value="P:negative regulation of transcription by RNA polymerase II"/>
    <property type="evidence" value="ECO:0000315"/>
    <property type="project" value="UniProtKB"/>
</dbReference>
<dbReference type="GO" id="GO:0051081">
    <property type="term" value="P:nuclear membrane disassembly"/>
    <property type="evidence" value="ECO:0000315"/>
    <property type="project" value="UniProtKB"/>
</dbReference>
<dbReference type="GO" id="GO:0018105">
    <property type="term" value="P:peptidyl-serine phosphorylation"/>
    <property type="evidence" value="ECO:0000314"/>
    <property type="project" value="UniProtKB"/>
</dbReference>
<dbReference type="GO" id="GO:0032436">
    <property type="term" value="P:positive regulation of proteasomal ubiquitin-dependent protein catabolic process"/>
    <property type="evidence" value="ECO:0000315"/>
    <property type="project" value="UniProtKB"/>
</dbReference>
<dbReference type="GO" id="GO:1900182">
    <property type="term" value="P:positive regulation of protein localization to nucleus"/>
    <property type="evidence" value="ECO:0000304"/>
    <property type="project" value="Reactome"/>
</dbReference>
<dbReference type="GO" id="GO:0045862">
    <property type="term" value="P:positive regulation of proteolysis"/>
    <property type="evidence" value="ECO:0000314"/>
    <property type="project" value="UniProtKB"/>
</dbReference>
<dbReference type="GO" id="GO:1904668">
    <property type="term" value="P:positive regulation of ubiquitin protein ligase activity"/>
    <property type="evidence" value="ECO:0000314"/>
    <property type="project" value="UniProtKB"/>
</dbReference>
<dbReference type="GO" id="GO:0051443">
    <property type="term" value="P:positive regulation of ubiquitin-protein transferase activity"/>
    <property type="evidence" value="ECO:0000315"/>
    <property type="project" value="UniProtKB"/>
</dbReference>
<dbReference type="GO" id="GO:0031648">
    <property type="term" value="P:protein destabilization"/>
    <property type="evidence" value="ECO:0000314"/>
    <property type="project" value="UniProtKB"/>
</dbReference>
<dbReference type="GO" id="GO:0071168">
    <property type="term" value="P:protein localization to chromatin"/>
    <property type="evidence" value="ECO:0000314"/>
    <property type="project" value="UniProtKB"/>
</dbReference>
<dbReference type="GO" id="GO:0090435">
    <property type="term" value="P:protein localization to nuclear envelope"/>
    <property type="evidence" value="ECO:0000315"/>
    <property type="project" value="UniProtKB"/>
</dbReference>
<dbReference type="GO" id="GO:0006468">
    <property type="term" value="P:protein phosphorylation"/>
    <property type="evidence" value="ECO:0000314"/>
    <property type="project" value="UniProtKB"/>
</dbReference>
<dbReference type="GO" id="GO:0016567">
    <property type="term" value="P:protein ubiquitination"/>
    <property type="evidence" value="ECO:0000314"/>
    <property type="project" value="UniProtKB"/>
</dbReference>
<dbReference type="GO" id="GO:1905784">
    <property type="term" value="P:regulation of anaphase-promoting complex-dependent catabolic process"/>
    <property type="evidence" value="ECO:0000304"/>
    <property type="project" value="Reactome"/>
</dbReference>
<dbReference type="GO" id="GO:0051726">
    <property type="term" value="P:regulation of cell cycle"/>
    <property type="evidence" value="ECO:0000304"/>
    <property type="project" value="Reactome"/>
</dbReference>
<dbReference type="GO" id="GO:0032465">
    <property type="term" value="P:regulation of cytokinesis"/>
    <property type="evidence" value="ECO:0000314"/>
    <property type="project" value="UniProtKB"/>
</dbReference>
<dbReference type="GO" id="GO:0007346">
    <property type="term" value="P:regulation of mitotic cell cycle"/>
    <property type="evidence" value="ECO:0000315"/>
    <property type="project" value="UniProtKB"/>
</dbReference>
<dbReference type="GO" id="GO:1901990">
    <property type="term" value="P:regulation of mitotic cell cycle phase transition"/>
    <property type="evidence" value="ECO:0000304"/>
    <property type="project" value="Reactome"/>
</dbReference>
<dbReference type="GO" id="GO:0030071">
    <property type="term" value="P:regulation of mitotic metaphase/anaphase transition"/>
    <property type="evidence" value="ECO:0000314"/>
    <property type="project" value="UniProtKB"/>
</dbReference>
<dbReference type="GO" id="GO:1901673">
    <property type="term" value="P:regulation of mitotic spindle assembly"/>
    <property type="evidence" value="ECO:0000314"/>
    <property type="project" value="CACAO"/>
</dbReference>
<dbReference type="GO" id="GO:1904776">
    <property type="term" value="P:regulation of protein localization to cell cortex"/>
    <property type="evidence" value="ECO:0000314"/>
    <property type="project" value="UniProtKB"/>
</dbReference>
<dbReference type="GO" id="GO:0007062">
    <property type="term" value="P:sister chromatid cohesion"/>
    <property type="evidence" value="ECO:0000304"/>
    <property type="project" value="Reactome"/>
</dbReference>
<dbReference type="GO" id="GO:0070194">
    <property type="term" value="P:synaptonemal complex disassembly"/>
    <property type="evidence" value="ECO:0007669"/>
    <property type="project" value="Ensembl"/>
</dbReference>
<dbReference type="CDD" id="cd13118">
    <property type="entry name" value="POLO_box_1"/>
    <property type="match status" value="1"/>
</dbReference>
<dbReference type="CDD" id="cd13117">
    <property type="entry name" value="POLO_box_2"/>
    <property type="match status" value="1"/>
</dbReference>
<dbReference type="CDD" id="cd14187">
    <property type="entry name" value="STKc_PLK1"/>
    <property type="match status" value="1"/>
</dbReference>
<dbReference type="FunFam" id="1.10.510.10:FF:000727">
    <property type="entry name" value="Serine/threonine-protein kinase PLK"/>
    <property type="match status" value="1"/>
</dbReference>
<dbReference type="FunFam" id="3.30.1120.30:FF:000003">
    <property type="entry name" value="Serine/threonine-protein kinase PLK"/>
    <property type="match status" value="1"/>
</dbReference>
<dbReference type="FunFam" id="3.30.200.20:FF:000284">
    <property type="entry name" value="Serine/threonine-protein kinase PLK"/>
    <property type="match status" value="1"/>
</dbReference>
<dbReference type="Gene3D" id="3.30.200.20">
    <property type="entry name" value="Phosphorylase Kinase, domain 1"/>
    <property type="match status" value="1"/>
</dbReference>
<dbReference type="Gene3D" id="3.30.1120.30">
    <property type="entry name" value="POLO box domain"/>
    <property type="match status" value="2"/>
</dbReference>
<dbReference type="Gene3D" id="1.10.510.10">
    <property type="entry name" value="Transferase(Phosphotransferase) domain 1"/>
    <property type="match status" value="1"/>
</dbReference>
<dbReference type="IDEAL" id="IID00200"/>
<dbReference type="InterPro" id="IPR011009">
    <property type="entry name" value="Kinase-like_dom_sf"/>
</dbReference>
<dbReference type="InterPro" id="IPR033702">
    <property type="entry name" value="PLK1_cat"/>
</dbReference>
<dbReference type="InterPro" id="IPR033701">
    <property type="entry name" value="POLO_box_1"/>
</dbReference>
<dbReference type="InterPro" id="IPR033695">
    <property type="entry name" value="POLO_box_2"/>
</dbReference>
<dbReference type="InterPro" id="IPR000959">
    <property type="entry name" value="POLO_box_dom"/>
</dbReference>
<dbReference type="InterPro" id="IPR036947">
    <property type="entry name" value="POLO_box_dom_sf"/>
</dbReference>
<dbReference type="InterPro" id="IPR000719">
    <property type="entry name" value="Prot_kinase_dom"/>
</dbReference>
<dbReference type="InterPro" id="IPR017441">
    <property type="entry name" value="Protein_kinase_ATP_BS"/>
</dbReference>
<dbReference type="InterPro" id="IPR008271">
    <property type="entry name" value="Ser/Thr_kinase_AS"/>
</dbReference>
<dbReference type="PANTHER" id="PTHR24345">
    <property type="entry name" value="SERINE/THREONINE-PROTEIN KINASE PLK"/>
    <property type="match status" value="1"/>
</dbReference>
<dbReference type="PANTHER" id="PTHR24345:SF93">
    <property type="entry name" value="SERINE_THREONINE-PROTEIN KINASE PLK1"/>
    <property type="match status" value="1"/>
</dbReference>
<dbReference type="Pfam" id="PF00069">
    <property type="entry name" value="Pkinase"/>
    <property type="match status" value="1"/>
</dbReference>
<dbReference type="Pfam" id="PF00659">
    <property type="entry name" value="POLO_box"/>
    <property type="match status" value="2"/>
</dbReference>
<dbReference type="SMART" id="SM00220">
    <property type="entry name" value="S_TKc"/>
    <property type="match status" value="1"/>
</dbReference>
<dbReference type="SUPFAM" id="SSF82615">
    <property type="entry name" value="Polo-box domain"/>
    <property type="match status" value="2"/>
</dbReference>
<dbReference type="SUPFAM" id="SSF56112">
    <property type="entry name" value="Protein kinase-like (PK-like)"/>
    <property type="match status" value="1"/>
</dbReference>
<dbReference type="PROSITE" id="PS50078">
    <property type="entry name" value="POLO_BOX"/>
    <property type="match status" value="2"/>
</dbReference>
<dbReference type="PROSITE" id="PS00107">
    <property type="entry name" value="PROTEIN_KINASE_ATP"/>
    <property type="match status" value="1"/>
</dbReference>
<dbReference type="PROSITE" id="PS50011">
    <property type="entry name" value="PROTEIN_KINASE_DOM"/>
    <property type="match status" value="1"/>
</dbReference>
<dbReference type="PROSITE" id="PS00108">
    <property type="entry name" value="PROTEIN_KINASE_ST"/>
    <property type="match status" value="1"/>
</dbReference>
<keyword id="KW-0002">3D-structure</keyword>
<keyword id="KW-0007">Acetylation</keyword>
<keyword id="KW-0067">ATP-binding</keyword>
<keyword id="KW-0131">Cell cycle</keyword>
<keyword id="KW-0132">Cell division</keyword>
<keyword id="KW-0137">Centromere</keyword>
<keyword id="KW-0158">Chromosome</keyword>
<keyword id="KW-0963">Cytoplasm</keyword>
<keyword id="KW-0206">Cytoskeleton</keyword>
<keyword id="KW-1017">Isopeptide bond</keyword>
<keyword id="KW-0418">Kinase</keyword>
<keyword id="KW-0995">Kinetochore</keyword>
<keyword id="KW-0498">Mitosis</keyword>
<keyword id="KW-0547">Nucleotide-binding</keyword>
<keyword id="KW-0539">Nucleus</keyword>
<keyword id="KW-0597">Phosphoprotein</keyword>
<keyword id="KW-1267">Proteomics identification</keyword>
<keyword id="KW-1185">Reference proteome</keyword>
<keyword id="KW-0677">Repeat</keyword>
<keyword id="KW-0723">Serine/threonine-protein kinase</keyword>
<keyword id="KW-0808">Transferase</keyword>
<keyword id="KW-0832">Ubl conjugation</keyword>
<gene>
    <name type="primary">PLK1</name>
    <name type="synonym">PLK</name>
</gene>